<gene>
    <name evidence="36" type="primary">Itpr1</name>
    <name evidence="28" type="synonym">Insp3r</name>
    <name evidence="30" type="synonym">Pcd6</name>
    <name type="synonym">Pcp1</name>
</gene>
<dbReference type="EMBL" id="X15373">
    <property type="protein sequence ID" value="CAA33433.1"/>
    <property type="molecule type" value="mRNA"/>
</dbReference>
<dbReference type="EMBL" id="AC120411">
    <property type="status" value="NOT_ANNOTATED_CDS"/>
    <property type="molecule type" value="Genomic_DNA"/>
</dbReference>
<dbReference type="EMBL" id="AC153986">
    <property type="status" value="NOT_ANNOTATED_CDS"/>
    <property type="molecule type" value="Genomic_DNA"/>
</dbReference>
<dbReference type="EMBL" id="AC156506">
    <property type="status" value="NOT_ANNOTATED_CDS"/>
    <property type="molecule type" value="Genomic_DNA"/>
</dbReference>
<dbReference type="EMBL" id="M75986">
    <property type="protein sequence ID" value="AAA39316.1"/>
    <property type="molecule type" value="Genomic_DNA"/>
</dbReference>
<dbReference type="EMBL" id="M75987">
    <property type="protein sequence ID" value="AAA39317.1"/>
    <property type="molecule type" value="Genomic_DNA"/>
</dbReference>
<dbReference type="EMBL" id="BC003271">
    <property type="protein sequence ID" value="AAH03271.1"/>
    <property type="status" value="ALT_INIT"/>
    <property type="molecule type" value="mRNA"/>
</dbReference>
<dbReference type="EMBL" id="M21530">
    <property type="protein sequence ID" value="AAA88319.1"/>
    <property type="status" value="ALT_INIT"/>
    <property type="molecule type" value="mRNA"/>
</dbReference>
<dbReference type="CCDS" id="CCDS51869.1">
    <molecule id="P11881-1"/>
</dbReference>
<dbReference type="PIR" id="S04844">
    <property type="entry name" value="ACMSIT"/>
</dbReference>
<dbReference type="RefSeq" id="NP_034715.3">
    <molecule id="P11881-1"/>
    <property type="nucleotide sequence ID" value="NM_010585.5"/>
</dbReference>
<dbReference type="RefSeq" id="XP_006505693.1">
    <molecule id="P11881-2"/>
    <property type="nucleotide sequence ID" value="XM_006505630.1"/>
</dbReference>
<dbReference type="RefSeq" id="XP_006505699.1">
    <molecule id="P11881-7"/>
    <property type="nucleotide sequence ID" value="XM_006505636.1"/>
</dbReference>
<dbReference type="RefSeq" id="XP_006505700.1">
    <molecule id="P11881-8"/>
    <property type="nucleotide sequence ID" value="XM_006505637.1"/>
</dbReference>
<dbReference type="RefSeq" id="XP_017176897.1">
    <molecule id="P11881-3"/>
    <property type="nucleotide sequence ID" value="XM_017321408.1"/>
</dbReference>
<dbReference type="RefSeq" id="XP_017176899.1">
    <molecule id="P11881-4"/>
    <property type="nucleotide sequence ID" value="XM_017321410.1"/>
</dbReference>
<dbReference type="PDB" id="1N4K">
    <property type="method" value="X-ray"/>
    <property type="resolution" value="2.20 A"/>
    <property type="chains" value="A=224-604"/>
</dbReference>
<dbReference type="PDB" id="1XZZ">
    <property type="method" value="X-ray"/>
    <property type="resolution" value="1.80 A"/>
    <property type="chains" value="A=2-223"/>
</dbReference>
<dbReference type="PDB" id="5GUG">
    <property type="method" value="X-ray"/>
    <property type="resolution" value="7.40 A"/>
    <property type="chains" value="A/B=1-2217"/>
</dbReference>
<dbReference type="PDB" id="5X9Z">
    <property type="method" value="X-ray"/>
    <property type="resolution" value="7.31 A"/>
    <property type="chains" value="A/B=1-2217"/>
</dbReference>
<dbReference type="PDB" id="5XA0">
    <property type="method" value="X-ray"/>
    <property type="resolution" value="5.81 A"/>
    <property type="chains" value="A/B=1-1581"/>
</dbReference>
<dbReference type="PDB" id="5XA1">
    <property type="method" value="X-ray"/>
    <property type="resolution" value="6.20 A"/>
    <property type="chains" value="A/B=1-1581"/>
</dbReference>
<dbReference type="PDBsum" id="1N4K"/>
<dbReference type="PDBsum" id="1XZZ"/>
<dbReference type="PDBsum" id="5GUG"/>
<dbReference type="PDBsum" id="5X9Z"/>
<dbReference type="PDBsum" id="5XA0"/>
<dbReference type="PDBsum" id="5XA1"/>
<dbReference type="SASBDB" id="P11881"/>
<dbReference type="SMR" id="P11881"/>
<dbReference type="BioGRID" id="200847">
    <property type="interactions" value="44"/>
</dbReference>
<dbReference type="CORUM" id="P11881"/>
<dbReference type="DIP" id="DIP-32243N"/>
<dbReference type="FunCoup" id="P11881">
    <property type="interactions" value="2037"/>
</dbReference>
<dbReference type="IntAct" id="P11881">
    <property type="interactions" value="21"/>
</dbReference>
<dbReference type="MINT" id="P11881"/>
<dbReference type="STRING" id="10090.ENSMUSP00000032192"/>
<dbReference type="GlyConnect" id="2438">
    <molecule id="P11881-3"/>
    <property type="glycosylation" value="14 N-Linked glycans (1 site)"/>
</dbReference>
<dbReference type="GlyGen" id="P11881">
    <property type="glycosylation" value="6 sites, 5 N-linked glycans (5 sites), 1 O-linked glycan (1 site)"/>
</dbReference>
<dbReference type="iPTMnet" id="P11881"/>
<dbReference type="PhosphoSitePlus" id="P11881"/>
<dbReference type="SwissPalm" id="P11881"/>
<dbReference type="jPOST" id="P11881"/>
<dbReference type="PaxDb" id="10090-ENSMUSP00000032192"/>
<dbReference type="PeptideAtlas" id="P11881"/>
<dbReference type="ProteomicsDB" id="269006">
    <molecule id="P11881-1"/>
</dbReference>
<dbReference type="ProteomicsDB" id="269007">
    <molecule id="P11881-2"/>
</dbReference>
<dbReference type="ProteomicsDB" id="269008">
    <molecule id="P11881-3"/>
</dbReference>
<dbReference type="ProteomicsDB" id="269009">
    <molecule id="P11881-4"/>
</dbReference>
<dbReference type="ProteomicsDB" id="269010">
    <molecule id="P11881-5"/>
</dbReference>
<dbReference type="ProteomicsDB" id="269011">
    <molecule id="P11881-6"/>
</dbReference>
<dbReference type="ProteomicsDB" id="269012">
    <molecule id="P11881-7"/>
</dbReference>
<dbReference type="ProteomicsDB" id="269013">
    <molecule id="P11881-8"/>
</dbReference>
<dbReference type="Pumba" id="P11881"/>
<dbReference type="ABCD" id="P11881">
    <property type="antibodies" value="1 sequenced antibody"/>
</dbReference>
<dbReference type="Antibodypedia" id="5503">
    <property type="antibodies" value="423 antibodies from 41 providers"/>
</dbReference>
<dbReference type="DNASU" id="16438"/>
<dbReference type="Ensembl" id="ENSMUST00000032192.9">
    <molecule id="P11881-1"/>
    <property type="protein sequence ID" value="ENSMUSP00000032192.7"/>
    <property type="gene ID" value="ENSMUSG00000030102.12"/>
</dbReference>
<dbReference type="Ensembl" id="ENSMUST00000203615.3">
    <molecule id="P11881-3"/>
    <property type="protein sequence ID" value="ENSMUSP00000144880.2"/>
    <property type="gene ID" value="ENSMUSG00000030102.12"/>
</dbReference>
<dbReference type="GeneID" id="16438"/>
<dbReference type="KEGG" id="mmu:16438"/>
<dbReference type="UCSC" id="uc033itt.1">
    <molecule id="P11881-1"/>
    <property type="organism name" value="mouse"/>
</dbReference>
<dbReference type="AGR" id="MGI:96623"/>
<dbReference type="CTD" id="3708"/>
<dbReference type="MGI" id="MGI:96623">
    <property type="gene designation" value="Itpr1"/>
</dbReference>
<dbReference type="VEuPathDB" id="HostDB:ENSMUSG00000030102"/>
<dbReference type="eggNOG" id="KOG3533">
    <property type="taxonomic scope" value="Eukaryota"/>
</dbReference>
<dbReference type="GeneTree" id="ENSGT00940000155071"/>
<dbReference type="HOGENOM" id="CLU_000206_1_0_1"/>
<dbReference type="InParanoid" id="P11881"/>
<dbReference type="OMA" id="GSWLYIM"/>
<dbReference type="OrthoDB" id="76898at2759"/>
<dbReference type="PhylomeDB" id="P11881"/>
<dbReference type="TreeFam" id="TF312815"/>
<dbReference type="Reactome" id="R-MMU-114508">
    <property type="pathway name" value="Effects of PIP2 hydrolysis"/>
</dbReference>
<dbReference type="Reactome" id="R-MMU-139853">
    <property type="pathway name" value="Elevation of cytosolic Ca2+ levels"/>
</dbReference>
<dbReference type="Reactome" id="R-MMU-381676">
    <property type="pathway name" value="Glucagon-like Peptide-1 (GLP1) regulates insulin secretion"/>
</dbReference>
<dbReference type="Reactome" id="R-MMU-418457">
    <property type="pathway name" value="cGMP effects"/>
</dbReference>
<dbReference type="Reactome" id="R-MMU-5578775">
    <property type="pathway name" value="Ion homeostasis"/>
</dbReference>
<dbReference type="Reactome" id="R-MMU-983695">
    <property type="pathway name" value="Antigen activates B Cell Receptor (BCR) leading to generation of second messengers"/>
</dbReference>
<dbReference type="BioGRID-ORCS" id="16438">
    <property type="hits" value="1 hit in 78 CRISPR screens"/>
</dbReference>
<dbReference type="CD-CODE" id="CE726F99">
    <property type="entry name" value="Postsynaptic density"/>
</dbReference>
<dbReference type="ChiTaRS" id="Itpr1">
    <property type="organism name" value="mouse"/>
</dbReference>
<dbReference type="EvolutionaryTrace" id="P11881"/>
<dbReference type="PRO" id="PR:P11881"/>
<dbReference type="Proteomes" id="UP000000589">
    <property type="component" value="Chromosome 6"/>
</dbReference>
<dbReference type="RNAct" id="P11881">
    <property type="molecule type" value="protein"/>
</dbReference>
<dbReference type="Bgee" id="ENSMUSG00000030102">
    <property type="expression patterns" value="Expressed in cerebellar vermis and 268 other cell types or tissues"/>
</dbReference>
<dbReference type="ExpressionAtlas" id="P11881">
    <property type="expression patterns" value="baseline and differential"/>
</dbReference>
<dbReference type="GO" id="GO:0005955">
    <property type="term" value="C:calcineurin complex"/>
    <property type="evidence" value="ECO:0000314"/>
    <property type="project" value="MGI"/>
</dbReference>
<dbReference type="GO" id="GO:0005737">
    <property type="term" value="C:cytoplasm"/>
    <property type="evidence" value="ECO:0000314"/>
    <property type="project" value="MGI"/>
</dbReference>
<dbReference type="GO" id="GO:0005783">
    <property type="term" value="C:endoplasmic reticulum"/>
    <property type="evidence" value="ECO:0000314"/>
    <property type="project" value="UniProtKB"/>
</dbReference>
<dbReference type="GO" id="GO:0005789">
    <property type="term" value="C:endoplasmic reticulum membrane"/>
    <property type="evidence" value="ECO:0000314"/>
    <property type="project" value="UniProtKB"/>
</dbReference>
<dbReference type="GO" id="GO:0005635">
    <property type="term" value="C:nuclear envelope"/>
    <property type="evidence" value="ECO:0000314"/>
    <property type="project" value="MGI"/>
</dbReference>
<dbReference type="GO" id="GO:0005637">
    <property type="term" value="C:nuclear inner membrane"/>
    <property type="evidence" value="ECO:0000314"/>
    <property type="project" value="MGI"/>
</dbReference>
<dbReference type="GO" id="GO:0005730">
    <property type="term" value="C:nucleolus"/>
    <property type="evidence" value="ECO:0000314"/>
    <property type="project" value="MGI"/>
</dbReference>
<dbReference type="GO" id="GO:0048471">
    <property type="term" value="C:perinuclear region of cytoplasm"/>
    <property type="evidence" value="ECO:0007669"/>
    <property type="project" value="UniProtKB-SubCell"/>
</dbReference>
<dbReference type="GO" id="GO:0031088">
    <property type="term" value="C:platelet dense granule membrane"/>
    <property type="evidence" value="ECO:0007669"/>
    <property type="project" value="Ensembl"/>
</dbReference>
<dbReference type="GO" id="GO:0031094">
    <property type="term" value="C:platelet dense tubular network"/>
    <property type="evidence" value="ECO:0007669"/>
    <property type="project" value="Ensembl"/>
</dbReference>
<dbReference type="GO" id="GO:0014069">
    <property type="term" value="C:postsynaptic density"/>
    <property type="evidence" value="ECO:0000314"/>
    <property type="project" value="MGI"/>
</dbReference>
<dbReference type="GO" id="GO:0032991">
    <property type="term" value="C:protein-containing complex"/>
    <property type="evidence" value="ECO:0000353"/>
    <property type="project" value="MGI"/>
</dbReference>
<dbReference type="GO" id="GO:0016529">
    <property type="term" value="C:sarcoplasmic reticulum"/>
    <property type="evidence" value="ECO:0000314"/>
    <property type="project" value="MGI"/>
</dbReference>
<dbReference type="GO" id="GO:0098685">
    <property type="term" value="C:Schaffer collateral - CA1 synapse"/>
    <property type="evidence" value="ECO:0000314"/>
    <property type="project" value="SynGO"/>
</dbReference>
<dbReference type="GO" id="GO:0045202">
    <property type="term" value="C:synapse"/>
    <property type="evidence" value="ECO:0000353"/>
    <property type="project" value="MGI"/>
</dbReference>
<dbReference type="GO" id="GO:0030658">
    <property type="term" value="C:transport vesicle membrane"/>
    <property type="evidence" value="ECO:0007669"/>
    <property type="project" value="UniProtKB-SubCell"/>
</dbReference>
<dbReference type="GO" id="GO:0005524">
    <property type="term" value="F:ATP binding"/>
    <property type="evidence" value="ECO:0007669"/>
    <property type="project" value="UniProtKB-KW"/>
</dbReference>
<dbReference type="GO" id="GO:0019855">
    <property type="term" value="F:calcium channel inhibitor activity"/>
    <property type="evidence" value="ECO:0007669"/>
    <property type="project" value="Ensembl"/>
</dbReference>
<dbReference type="GO" id="GO:0070679">
    <property type="term" value="F:inositol 1,4,5 trisphosphate binding"/>
    <property type="evidence" value="ECO:0000314"/>
    <property type="project" value="UniProtKB"/>
</dbReference>
<dbReference type="GO" id="GO:0098695">
    <property type="term" value="F:inositol 1,4,5-trisphosphate receptor activity involved in regulation of postsynaptic cytosolic calcium levels"/>
    <property type="evidence" value="ECO:0000314"/>
    <property type="project" value="SynGO"/>
</dbReference>
<dbReference type="GO" id="GO:0005220">
    <property type="term" value="F:inositol 1,4,5-trisphosphate-gated calcium channel activity"/>
    <property type="evidence" value="ECO:0000314"/>
    <property type="project" value="UniProtKB"/>
</dbReference>
<dbReference type="GO" id="GO:0015278">
    <property type="term" value="F:intracellularly gated calcium channel activity"/>
    <property type="evidence" value="ECO:0000314"/>
    <property type="project" value="UniProtKB"/>
</dbReference>
<dbReference type="GO" id="GO:0046872">
    <property type="term" value="F:metal ion binding"/>
    <property type="evidence" value="ECO:0007669"/>
    <property type="project" value="UniProtKB-KW"/>
</dbReference>
<dbReference type="GO" id="GO:0035091">
    <property type="term" value="F:phosphatidylinositol binding"/>
    <property type="evidence" value="ECO:0000314"/>
    <property type="project" value="UniProtKB"/>
</dbReference>
<dbReference type="GO" id="GO:0019904">
    <property type="term" value="F:protein domain specific binding"/>
    <property type="evidence" value="ECO:0000353"/>
    <property type="project" value="MGI"/>
</dbReference>
<dbReference type="GO" id="GO:0042803">
    <property type="term" value="F:protein homodimerization activity"/>
    <property type="evidence" value="ECO:0000314"/>
    <property type="project" value="UniProtKB"/>
</dbReference>
<dbReference type="GO" id="GO:0036444">
    <property type="term" value="P:calcium import into the mitochondrion"/>
    <property type="evidence" value="ECO:0000250"/>
    <property type="project" value="UniProtKB"/>
</dbReference>
<dbReference type="GO" id="GO:0006816">
    <property type="term" value="P:calcium ion transport"/>
    <property type="evidence" value="ECO:0000314"/>
    <property type="project" value="MGI"/>
</dbReference>
<dbReference type="GO" id="GO:0000902">
    <property type="term" value="P:cell morphogenesis"/>
    <property type="evidence" value="ECO:0000315"/>
    <property type="project" value="MGI"/>
</dbReference>
<dbReference type="GO" id="GO:0032469">
    <property type="term" value="P:endoplasmic reticulum calcium ion homeostasis"/>
    <property type="evidence" value="ECO:0000316"/>
    <property type="project" value="MGI"/>
</dbReference>
<dbReference type="GO" id="GO:0042045">
    <property type="term" value="P:epithelial fluid transport"/>
    <property type="evidence" value="ECO:0000314"/>
    <property type="project" value="UniProtKB"/>
</dbReference>
<dbReference type="GO" id="GO:0070059">
    <property type="term" value="P:intrinsic apoptotic signaling pathway in response to endoplasmic reticulum stress"/>
    <property type="evidence" value="ECO:0000315"/>
    <property type="project" value="UniProtKB"/>
</dbReference>
<dbReference type="GO" id="GO:1990806">
    <property type="term" value="P:ligand-gated ion channel signaling pathway"/>
    <property type="evidence" value="ECO:0000315"/>
    <property type="project" value="MGI"/>
</dbReference>
<dbReference type="GO" id="GO:0050849">
    <property type="term" value="P:negative regulation of calcium-mediated signaling"/>
    <property type="evidence" value="ECO:0007669"/>
    <property type="project" value="Ensembl"/>
</dbReference>
<dbReference type="GO" id="GO:0007207">
    <property type="term" value="P:phospholipase C-activating G protein-coupled acetylcholine receptor signaling pathway"/>
    <property type="evidence" value="ECO:0000316"/>
    <property type="project" value="MGI"/>
</dbReference>
<dbReference type="GO" id="GO:0007200">
    <property type="term" value="P:phospholipase C-activating G protein-coupled receptor signaling pathway"/>
    <property type="evidence" value="ECO:0000315"/>
    <property type="project" value="MGI"/>
</dbReference>
<dbReference type="GO" id="GO:0043065">
    <property type="term" value="P:positive regulation of apoptotic process"/>
    <property type="evidence" value="ECO:0007669"/>
    <property type="project" value="Ensembl"/>
</dbReference>
<dbReference type="GO" id="GO:0032024">
    <property type="term" value="P:positive regulation of insulin secretion"/>
    <property type="evidence" value="ECO:0000315"/>
    <property type="project" value="MGI"/>
</dbReference>
<dbReference type="GO" id="GO:0009791">
    <property type="term" value="P:post-embryonic development"/>
    <property type="evidence" value="ECO:0000315"/>
    <property type="project" value="MGI"/>
</dbReference>
<dbReference type="GO" id="GO:0051289">
    <property type="term" value="P:protein homotetramerization"/>
    <property type="evidence" value="ECO:0000314"/>
    <property type="project" value="UniProtKB"/>
</dbReference>
<dbReference type="GO" id="GO:0051480">
    <property type="term" value="P:regulation of cytosolic calcium ion concentration"/>
    <property type="evidence" value="ECO:0000314"/>
    <property type="project" value="UniProtKB"/>
</dbReference>
<dbReference type="GO" id="GO:0051209">
    <property type="term" value="P:release of sequestered calcium ion into cytosol"/>
    <property type="evidence" value="ECO:0000315"/>
    <property type="project" value="UniProtKB"/>
</dbReference>
<dbReference type="GO" id="GO:1903514">
    <property type="term" value="P:release of sequestered calcium ion into cytosol by endoplasmic reticulum"/>
    <property type="evidence" value="ECO:0000250"/>
    <property type="project" value="UniProtKB"/>
</dbReference>
<dbReference type="GO" id="GO:0001666">
    <property type="term" value="P:response to hypoxia"/>
    <property type="evidence" value="ECO:0000314"/>
    <property type="project" value="BHF-UCL"/>
</dbReference>
<dbReference type="GO" id="GO:0007338">
    <property type="term" value="P:single fertilization"/>
    <property type="evidence" value="ECO:0000314"/>
    <property type="project" value="UniProtKB"/>
</dbReference>
<dbReference type="GO" id="GO:0050882">
    <property type="term" value="P:voluntary musculoskeletal movement"/>
    <property type="evidence" value="ECO:0000315"/>
    <property type="project" value="MGI"/>
</dbReference>
<dbReference type="CDD" id="cd23287">
    <property type="entry name" value="beta-trefoil_MIR_ITPR1"/>
    <property type="match status" value="1"/>
</dbReference>
<dbReference type="FunFam" id="2.80.10.50:FF:000002">
    <property type="entry name" value="Inositol 1,4,5-trisphosphate receptor type 2"/>
    <property type="match status" value="1"/>
</dbReference>
<dbReference type="FunFam" id="1.10.287.70:FF:000079">
    <property type="entry name" value="Inositol 1,4,5-trisphosphate receptor type 3"/>
    <property type="match status" value="1"/>
</dbReference>
<dbReference type="FunFam" id="1.25.10.30:FF:000001">
    <property type="entry name" value="Inositol 1,4,5-trisphosphate receptor, type 2"/>
    <property type="match status" value="1"/>
</dbReference>
<dbReference type="Gene3D" id="1.10.287.70">
    <property type="match status" value="1"/>
</dbReference>
<dbReference type="Gene3D" id="2.80.10.50">
    <property type="match status" value="2"/>
</dbReference>
<dbReference type="Gene3D" id="1.25.10.30">
    <property type="entry name" value="IP3 receptor type 1 binding core, RIH domain"/>
    <property type="match status" value="1"/>
</dbReference>
<dbReference type="InterPro" id="IPR014821">
    <property type="entry name" value="Ins145_P3_rcpt"/>
</dbReference>
<dbReference type="InterPro" id="IPR000493">
    <property type="entry name" value="InsP3_rcpt"/>
</dbReference>
<dbReference type="InterPro" id="IPR005821">
    <property type="entry name" value="Ion_trans_dom"/>
</dbReference>
<dbReference type="InterPro" id="IPR036300">
    <property type="entry name" value="MIR_dom_sf"/>
</dbReference>
<dbReference type="InterPro" id="IPR016093">
    <property type="entry name" value="MIR_motif"/>
</dbReference>
<dbReference type="InterPro" id="IPR013662">
    <property type="entry name" value="RIH_assoc-dom"/>
</dbReference>
<dbReference type="InterPro" id="IPR000699">
    <property type="entry name" value="RIH_dom"/>
</dbReference>
<dbReference type="InterPro" id="IPR015925">
    <property type="entry name" value="Ryanodine_IP3_receptor"/>
</dbReference>
<dbReference type="InterPro" id="IPR035910">
    <property type="entry name" value="RyR/IP3R_RIH_dom_sf"/>
</dbReference>
<dbReference type="PANTHER" id="PTHR45816:SF2">
    <property type="entry name" value="INOSITOL 1,4,5-TRISPHOSPHATE RECEPTOR"/>
    <property type="match status" value="1"/>
</dbReference>
<dbReference type="PANTHER" id="PTHR45816">
    <property type="entry name" value="MIR DOMAIN-CONTAINING PROTEIN"/>
    <property type="match status" value="1"/>
</dbReference>
<dbReference type="Pfam" id="PF08709">
    <property type="entry name" value="Ins145_P3_rec"/>
    <property type="match status" value="1"/>
</dbReference>
<dbReference type="Pfam" id="PF00520">
    <property type="entry name" value="Ion_trans"/>
    <property type="match status" value="1"/>
</dbReference>
<dbReference type="Pfam" id="PF02815">
    <property type="entry name" value="MIR"/>
    <property type="match status" value="1"/>
</dbReference>
<dbReference type="Pfam" id="PF08454">
    <property type="entry name" value="RIH_assoc"/>
    <property type="match status" value="1"/>
</dbReference>
<dbReference type="Pfam" id="PF01365">
    <property type="entry name" value="RYDR_ITPR"/>
    <property type="match status" value="2"/>
</dbReference>
<dbReference type="PRINTS" id="PR00779">
    <property type="entry name" value="INSP3RECEPTR"/>
</dbReference>
<dbReference type="SMART" id="SM00472">
    <property type="entry name" value="MIR"/>
    <property type="match status" value="4"/>
</dbReference>
<dbReference type="SUPFAM" id="SSF100909">
    <property type="entry name" value="IP3 receptor type 1 binding core, domain 2"/>
    <property type="match status" value="2"/>
</dbReference>
<dbReference type="SUPFAM" id="SSF82109">
    <property type="entry name" value="MIR domain"/>
    <property type="match status" value="2"/>
</dbReference>
<dbReference type="PROSITE" id="PS50919">
    <property type="entry name" value="MIR"/>
    <property type="match status" value="5"/>
</dbReference>
<sequence>MSDKMSSFLHIGDICSLYAEGSTNGFISTLGLVDDRCVVQPEAGDLNNPPKKFRDCLFKLCPMNRYSAQKQFWKAAKPGANSTTDAVLLNKLHHAADLEKKQNETENRKLLGTVIQYGNVIQLLHLKSNKYLTVNKRLPALLEKNAMRVTLDEAGNEGSWFYIQPFYKLRSIGDSVVIGDKVVLNPVNAGQPLHASSHQLVDNPGCNEVNSVNCNTSWKIVLFMKWSDNKDDILKGGDVVRLFHAEQEKFLTCDEHRKKQHVFLRTTGRQSATSATSSKALWEVEVVQHDPCRGGAGYWNSLFRFKHLATGHYLAAEVDPDFEEECLEFQPSVDPDQDASRSRLRNAQEKMVYSLVSVPEGNDISSIFELDPTTLRGGDSLVPRNSYVRLRHLCTNTWVHSTNIPIDKEEEKPVMLKIGTSPLKEDKEAFAIVPVSPAEVRDLDFANDASKVLGSIAGKLEKGTITQNERRSVTKLLEDLVYFVTGGTNSGQDVLEVVFSKPNRERQKLMREQNILKQIFKLLQAPFTDCGDGPMLRLEELGDQRHAPFRHICRLCYRVLRHSQQDYRKNQEYIAKQFGFMQKQIGYDVLAEDTITALLHNNRKLLEKHITAAEIDTFVSLVRKNREPRFLDYLSDLCVSMNKSIPVTQELICKAVLNPTNADILIETKLVLSRFEFEGVSTGENALEAGEDEEEVWLFWRDSNKEIRSKSVRELAQDAKEGQKEDRDILSYYRYQLNLFARMCLDRQYLAINEISGQLDVDLILRCMSDENLPYDLRASFCRLMLHMHVDRDPQEQVTPVKYARLWSEIPSEIAIDDYDSSGTSKDEIKERFAQTMEFVEEYLRDVVCQRFPFSDKEKNKLTFEVVNLARNLIYFGFYNFSDLLRLTKILLAILDCVHVTTIFPISKMTKGEENKGSNVMRSIHGVGELMTQVVLRGGGFLPMTPMAAAPEGNVKQAEPEKEDIMVMDTKLKIIEILQFILNVRLDYRISCLLCIFKREFDESNSQSSETSSGNSSQEGPSNVPGALDFEHIEEQAEGIFGGSEENTPLDLDDHGGRTFLRVLLHLTMHDYPPLVSGALQLLFRHFSQRQEVLQAFKQVQLLVTSQDVDNYKQIKQDLDQLRSIVEKSELWVYKGQGPDEPMDGASGENEHKKTEEGTSKPLKHESTSSYNYRVVKEILIRLSKLCVQESASVRKSRKQQQRLLRNMGAHAVVLELLQIPYEKAEDTKMQEIMRLAHEFLQNFCAGNQQNQALLHKHINLFLNPGILEAVTMQHIFMNNFQLCSEINERVVQHFVHCIETHGRNVQYIKFLQTIVKAEGKFIKKCQDMVMAELVNSGEDVLVFYNDRASFQTLIQMMRSERDRMDENSPLMYHIHLVELLAVCTEGKNVYTEIKCNSLLPLDDIVRVVTHEDCIPEVKIAYINFLNHCYVDTEVEMKEIYTSNHMWKLFENFLVDICRACNNTSDRKHADSILEKYVTEIVMSIVTTFFSSPFSDQSTTLQTRQPVFVQLLQGVFRVYHCNWLMPSQKASVESCIRVLSDVAKSRAIAIPVDLDSQVNNLFLKSHNIVQKTALNWRLSARNAARRDSVLAASRDYRNIIERLQDIVSALEDRLRPLVQAELSVLVDVLHRPELLFPENTDARRKCESGGFICKLIKHTKQLLEENEEKLCIKVLQTLREMMTKDRGYGEKQISIDESENAELPQAPEAENSTEQELEPSPPLRQLEDHKRGEALRQILVNRYYGNIRPSGRRESLTSFGNGPLSPGGPSKPGGGGGGPGSSSTSRGEMSLAEVQCHLDKEGASNLVIDLIMNASSDRVFHESILLAIALLEGGNTTIQHSFFCRLTEDKKSEKFFKVFYDRMKVAQQEIKATVTVNTSDLGNKKKDDEVDRDAPSRKKAKEPTTQITEEVRDQLLEASAATRKAFTTFRREADPDDHYQSGEGTQATTDKAKDDLEMSAVITIMQPILRFLQLLCENHNRDLQNFLRCQNNKTNYNLVCETLQFLDCICGSTTGGLGLLGLYINEKNVALINQTLESLTEYCQGPCHENQNCIATHESNGIDIITALILNDINPLGKKRMDLVLELKNNASKLLLAIMESRHDSENAERILYNMRPKELVEVIKKAYMQGEVEFEDGENGEDGAASPRNVGHNIYILAHQLARHNKELQTMLKPGGQVDGDEALEFYAKHTAQIEIVRLDRTMEQIVFPVPSICEFLTKESKLRIYYTTERDEQGSKINDFFLRSEDLFNEMNWQKKLRAQPVLYWCARNMSFWSSISFNLAVLMNLLVAFFYPFKGVRGGTLEPHWSGLLWTAMLISLAIVIALPKPHGIRALIASTILRLIFSVGLQPTLFLLGAFNVCNKIIFLMSFVGNCGTFTRGYRAMVLDVEFLYHLLYLLICAMGLFVHEFFYSLLLFDLVYREETLLNVIKSVTRNGRSIILTAVLALILVYLFSIVGYLFFKDDFILEVDRLPNETAVPETGESLANDFLYSDVCRVETGENCTSPAPKEELLPAEETEQDKEHTCETLLMCIVTVLSHGLRSGGGVGDVLRKPSKEEPLFAARVIYDLLFFFMVIIIVLNLIFGVIIDTFADLRSEKQKKEEILKTTCFICGLERDKFDNKTVTFEEHIKEEHNMWHYLCFIVLVKVKDSTEYTGPESYVAEMIRERNLDWFPRMRAMSLVSSDSEGEQNELRNLQEKLESTMKLVTNLSGQLSELKDQMTEQRKQKQRIGLLGHPPHMNVNPQQPA</sequence>
<keyword id="KW-0002">3D-structure</keyword>
<keyword id="KW-0025">Alternative splicing</keyword>
<keyword id="KW-0053">Apoptosis</keyword>
<keyword id="KW-0067">ATP-binding</keyword>
<keyword id="KW-0106">Calcium</keyword>
<keyword id="KW-0107">Calcium channel</keyword>
<keyword id="KW-0109">Calcium transport</keyword>
<keyword id="KW-0963">Cytoplasm</keyword>
<keyword id="KW-0968">Cytoplasmic vesicle</keyword>
<keyword id="KW-0903">Direct protein sequencing</keyword>
<keyword id="KW-1015">Disulfide bond</keyword>
<keyword id="KW-0256">Endoplasmic reticulum</keyword>
<keyword id="KW-0407">Ion channel</keyword>
<keyword id="KW-0406">Ion transport</keyword>
<keyword id="KW-1017">Isopeptide bond</keyword>
<keyword id="KW-1071">Ligand-gated ion channel</keyword>
<keyword id="KW-0449">Lipoprotein</keyword>
<keyword id="KW-0472">Membrane</keyword>
<keyword id="KW-0479">Metal-binding</keyword>
<keyword id="KW-0547">Nucleotide-binding</keyword>
<keyword id="KW-0564">Palmitate</keyword>
<keyword id="KW-0597">Phosphoprotein</keyword>
<keyword id="KW-0675">Receptor</keyword>
<keyword id="KW-1185">Reference proteome</keyword>
<keyword id="KW-0677">Repeat</keyword>
<keyword id="KW-0812">Transmembrane</keyword>
<keyword id="KW-1133">Transmembrane helix</keyword>
<keyword id="KW-0813">Transport</keyword>
<keyword id="KW-0832">Ubl conjugation</keyword>
<keyword id="KW-0862">Zinc</keyword>
<comment type="function">
    <text evidence="1 9 10 15 16 17 21 22 23 24 25">Inositol 1,4,5-trisphosphate-gated calcium channel that, upon inositol 1,4,5-trisphosphate binding, mediates calcium release from the endoplasmic reticulum (ER) and participates in calcium oscillations (PubMed:11955285, PubMed:12442173, PubMed:20813840, PubMed:2554142, PubMed:28416699, PubMed:35568199, PubMed:38099643). Undergoes conformational changes upon ligand binding, suggesting structural flexibility that allows the channel to switch from a closed state, capable of interacting with its ligands such as inositol 1,4,5-trisphosphate and Ca(2+), to an open state, capable of transferring calcium ions across the ER membrane (By similarity). Cytoplasmic calcium, released from the ER, triggers apoptosis by the activation of CAMK2 complex (PubMed:19752026). Part of a complex composed of HSPA9, ITPR1 and VDAC1 that regulates mitochondrial calcium-dependent apoptosis by facilitating calcium transport from the ER lumen to the mitochondria intermembrane space thus providing calcium for the downstream calcium channel MCU that directly releases it into mitochondria matrix (PubMed:29907098). Involved in the regulation of epithelial secretion of electrolytes and fluid through the interaction with AHCYL1 (PubMed:23542070). Regulates fertilization and egg activation by tuning the frequency and amplitude of calcium oscillations (PubMed:38099643).</text>
</comment>
<comment type="catalytic activity">
    <reaction evidence="9 16 22 24 25">
        <text>Ca(2+)(in) = Ca(2+)(out)</text>
        <dbReference type="Rhea" id="RHEA:29671"/>
        <dbReference type="ChEBI" id="CHEBI:29108"/>
    </reaction>
</comment>
<comment type="activity regulation">
    <text evidence="1 3 25">Inositol 1,4,5-trisphosphate-gated calcium channel activity is regulated by cytosolic calcium in a biphasic manner, with low concentrations causing activation and higher concentrations inhibiting channel opening, giving rise to calcium oscillations. ATP increases the open probability of ITPR1 by synergizing with the activating effect of these two primarily ligands, inositol 1,4,5-trisphosphate and calcium (By similarity). Inositol 1,4,5-trisphosphate-gated calcium channel activity is activated by zinc ions (PubMed:38099643). Inositol 1,4,5-trisphosphate-gated calcium channel activity is inhibited by CALM1 in a calcium-dependent manner (By similarity).</text>
</comment>
<comment type="subunit">
    <text evidence="1 3 4 8 9 11 12 13 14 17 18 19 22 24">Homodimer (PubMed:28416699). Homotetramer (PubMed:35568199). Interacts with ERP44 in a pH-, redox state- and calcium-dependent manner which results in the inhibition the calcium channel activity (PubMed:15652484). The strength of this interaction inversely correlates with calcium concentration (PubMed:15652484). Part of cGMP kinase signaling complex at least composed of ACTA2/alpha-actin, CNN1/calponin H1, PLN/phospholamban, PRKG1 and ITPR1 (By similarity). Interacts with IRAG1 (PubMed:16990611). Interacts with CABP1 (via N-terminus) (By similarity). Interacts with TESPA1 (PubMed:23650607). Interacts (when not phosphorylated) with AHCYL1 (when phosphorylated); the interaction suppresses inositol 1,4,5-trisphosphate binding to ITPR1 and is increased in the presence of BCL2L10 (PubMed:12525476, PubMed:16527252, PubMed:23542070). Interacts with AHCYL2 (with lower affinity than with AHCYL1). Interacts with BCL2L10; the interaction is increased in the presence of AHCLY1 (By similarity). Interacts with BOK (via BH4 domain); protects ITPR1 from proteolysis by CASP3 during apoptosis (PubMed:23884412). Interacts with TRPC4 (By similarity). Interacts with CHGA and CHGB (By similarity). Interacts with CALM1; this interaction inhibits inositol 1,4,5 trisphosphate binding in both the presence and absence of calcium and Inositol 1,4,5-trisphosphate-induced calcium release in the presence of calcium (PubMed:10620513, PubMed:11955285). Interacts with the complex composed by ERLIN1, ERLIN2 and RNF170 through ERLIN2; this interaction triggers its ubiquitin-proteasomal degradation (PubMed:35568199). Interacts with HSPA9; this interaction couples ITPR1 to VDAC1 (By similarity).</text>
</comment>
<comment type="interaction">
    <interactant intactId="EBI-541478">
        <id>P11881</id>
    </interactant>
    <interactant intactId="EBI-444536">
        <id>Q8VDN2</id>
        <label>Atp1a1</label>
    </interactant>
    <organismsDiffer>false</organismsDiffer>
    <experiments>3</experiments>
</comment>
<comment type="interaction">
    <interactant intactId="EBI-541478">
        <id>P11881</id>
    </interactant>
    <interactant intactId="EBI-6665421">
        <id>Q6PIE5</id>
        <label>Atp1a2</label>
    </interactant>
    <organismsDiffer>false</organismsDiffer>
    <experiments>3</experiments>
</comment>
<comment type="interaction">
    <interactant intactId="EBI-541478">
        <id>P11881</id>
    </interactant>
    <interactant intactId="EBI-541567">
        <id>Q9D1Q6</id>
        <label>Erp44</label>
    </interactant>
    <organismsDiffer>false</organismsDiffer>
    <experiments>5</experiments>
</comment>
<comment type="interaction">
    <interactant intactId="EBI-541478">
        <id>P11881</id>
    </interactant>
    <interactant intactId="EBI-8351080">
        <id>O35157</id>
        <label>Slc8a1</label>
    </interactant>
    <organismsDiffer>false</organismsDiffer>
    <experiments>4</experiments>
</comment>
<comment type="interaction">
    <interactant intactId="EBI-541478">
        <id>P11881</id>
    </interactant>
    <interactant intactId="EBI-77694">
        <id>P10415</id>
        <label>BCL2</label>
    </interactant>
    <organismsDiffer>true</organismsDiffer>
    <experiments>3</experiments>
</comment>
<comment type="subcellular location">
    <subcellularLocation>
        <location evidence="22 33 34">Endoplasmic reticulum membrane</location>
        <topology evidence="1 5">Multi-pass membrane protein</topology>
    </subcellularLocation>
    <subcellularLocation>
        <location evidence="4">Cytoplasmic vesicle</location>
        <location evidence="4">Secretory vesicle membrane</location>
        <topology evidence="1 5">Multi-pass membrane protein</topology>
    </subcellularLocation>
    <subcellularLocation>
        <location evidence="3">Cytoplasm</location>
        <location evidence="3">Perinuclear region</location>
    </subcellularLocation>
    <text evidence="1 4">Found in a complex with HSPA9 and VDAC1 at the endoplasmic reticulum-mitochondria contact sites.</text>
</comment>
<comment type="alternative products">
    <event type="alternative splicing"/>
    <isoform>
        <id>P11881-1</id>
        <name>1</name>
        <name>SISIIABC</name>
        <sequence type="displayed"/>
    </isoform>
    <isoform>
        <id>P11881-2</id>
        <name>2</name>
        <name>SI-SIIABC</name>
        <sequence type="described" ref="VSP_002691"/>
    </isoform>
    <isoform>
        <id>P11881-3</id>
        <name>3</name>
        <name>SISIIAC</name>
        <sequence type="described" ref="VSP_002693"/>
    </isoform>
    <isoform>
        <id>P11881-4</id>
        <name>4</name>
        <name>SI-SIIAC</name>
        <sequence type="described" ref="VSP_002691 VSP_002693"/>
    </isoform>
    <isoform>
        <id>P11881-5</id>
        <name>5</name>
        <name>SISIIA</name>
        <sequence type="described" ref="VSP_002693 VSP_002694"/>
    </isoform>
    <isoform>
        <id>P11881-6</id>
        <name>6</name>
        <name>SI-SIIA</name>
        <sequence type="described" ref="VSP_002691 VSP_002693 VSP_002694"/>
    </isoform>
    <isoform>
        <id>P11881-7</id>
        <name>7</name>
        <name>SISII</name>
        <sequence type="described" ref="VSP_002692 VSP_002693 VSP_002694"/>
    </isoform>
    <isoform>
        <id>P11881-8</id>
        <name>8</name>
        <name>SI-SII</name>
        <sequence type="described" ref="VSP_002691 VSP_002692 VSP_002693 VSP_002694"/>
    </isoform>
    <text>There is a combination of two alternatively spliced domains at site SI and site SII (A, B and C). Experimental confirmation may be lacking for some isoforms.</text>
</comment>
<comment type="domain">
    <text evidence="1">The ITPR1 structure has a large solenoid CY assembly built around the central helical bundle made of the C-terminal domains from four ITPR1 subunits. The solenoid scaffold includes domains responsible for binding of ligands and regulatory proteins and is connected via an allosteric nexus at the cytosolic-membrane interface to the transmembrane channel assembly. Six transmembrane helices from each subunit form the central ion-conduction pore.</text>
</comment>
<comment type="PTM">
    <text evidence="1 24">Polyubiquitinated (PubMed:35568199). Polyubiquitination targets ITPR1 for proteasomal degradation (PubMed:35568199). Approximately 40% of the ITPR1-associated ubiquitin is monoubiquitin, and polyubiquitins are both 'Lys-48'- and 'Lys-63'-linked (By similarity).</text>
</comment>
<comment type="PTM">
    <text evidence="1 32">Phosphorylation by cAMP kinase (PKA) enhances calcium release (By similarity). Phosphorylation by PKA increases the interaction with inositol 1,4,5-trisphosphate and decreases the interaction with AHCYL1 (Probable).</text>
</comment>
<comment type="PTM">
    <text evidence="3">Phosphorylated on tyrosine residues.</text>
</comment>
<comment type="PTM">
    <text evidence="20">Palmitoylated by ZDHHC6 in immune cells, leading to regulation of ITPR1 stability and function (PubMed:25368151).</text>
</comment>
<comment type="similarity">
    <text evidence="31">Belongs to the InsP3 receptor family.</text>
</comment>
<comment type="sequence caution" evidence="31">
    <conflict type="erroneous initiation">
        <sequence resource="EMBL-CDS" id="AAA88319"/>
    </conflict>
    <text>Truncated N-terminus.</text>
</comment>
<comment type="sequence caution" evidence="31">
    <conflict type="erroneous initiation">
        <sequence resource="EMBL-CDS" id="AAH03271"/>
    </conflict>
    <text>Truncated N-terminus.</text>
</comment>
<evidence type="ECO:0000250" key="1">
    <source>
        <dbReference type="UniProtKB" id="P29994"/>
    </source>
</evidence>
<evidence type="ECO:0000250" key="2">
    <source>
        <dbReference type="UniProtKB" id="Q14573"/>
    </source>
</evidence>
<evidence type="ECO:0000250" key="3">
    <source>
        <dbReference type="UniProtKB" id="Q14643"/>
    </source>
</evidence>
<evidence type="ECO:0000250" key="4">
    <source>
        <dbReference type="UniProtKB" id="Q9TU34"/>
    </source>
</evidence>
<evidence type="ECO:0000255" key="5"/>
<evidence type="ECO:0000255" key="6">
    <source>
        <dbReference type="PROSITE-ProRule" id="PRU00131"/>
    </source>
</evidence>
<evidence type="ECO:0000256" key="7">
    <source>
        <dbReference type="SAM" id="MobiDB-lite"/>
    </source>
</evidence>
<evidence type="ECO:0000269" key="8">
    <source>
    </source>
</evidence>
<evidence type="ECO:0000269" key="9">
    <source>
    </source>
</evidence>
<evidence type="ECO:0000269" key="10">
    <source>
    </source>
</evidence>
<evidence type="ECO:0000269" key="11">
    <source>
    </source>
</evidence>
<evidence type="ECO:0000269" key="12">
    <source>
    </source>
</evidence>
<evidence type="ECO:0000269" key="13">
    <source>
    </source>
</evidence>
<evidence type="ECO:0000269" key="14">
    <source>
    </source>
</evidence>
<evidence type="ECO:0000269" key="15">
    <source>
    </source>
</evidence>
<evidence type="ECO:0000269" key="16">
    <source>
    </source>
</evidence>
<evidence type="ECO:0000269" key="17">
    <source>
    </source>
</evidence>
<evidence type="ECO:0000269" key="18">
    <source>
    </source>
</evidence>
<evidence type="ECO:0000269" key="19">
    <source>
    </source>
</evidence>
<evidence type="ECO:0000269" key="20">
    <source>
    </source>
</evidence>
<evidence type="ECO:0000269" key="21">
    <source>
    </source>
</evidence>
<evidence type="ECO:0000269" key="22">
    <source>
    </source>
</evidence>
<evidence type="ECO:0000269" key="23">
    <source>
    </source>
</evidence>
<evidence type="ECO:0000269" key="24">
    <source>
    </source>
</evidence>
<evidence type="ECO:0000269" key="25">
    <source>
    </source>
</evidence>
<evidence type="ECO:0000303" key="26">
    <source>
    </source>
</evidence>
<evidence type="ECO:0000303" key="27">
    <source>
    </source>
</evidence>
<evidence type="ECO:0000303" key="28">
    <source>
    </source>
</evidence>
<evidence type="ECO:0000303" key="29">
    <source>
    </source>
</evidence>
<evidence type="ECO:0000303" key="30">
    <source>
    </source>
</evidence>
<evidence type="ECO:0000305" key="31"/>
<evidence type="ECO:0000305" key="32">
    <source>
    </source>
</evidence>
<evidence type="ECO:0000305" key="33">
    <source>
    </source>
</evidence>
<evidence type="ECO:0000305" key="34">
    <source>
    </source>
</evidence>
<evidence type="ECO:0000305" key="35">
    <source>
    </source>
</evidence>
<evidence type="ECO:0000312" key="36">
    <source>
        <dbReference type="MGI" id="MGI:96623"/>
    </source>
</evidence>
<evidence type="ECO:0007744" key="37">
    <source>
        <dbReference type="PDB" id="1N4K"/>
    </source>
</evidence>
<evidence type="ECO:0007744" key="38">
    <source>
        <dbReference type="PDB" id="1XZZ"/>
    </source>
</evidence>
<evidence type="ECO:0007744" key="39">
    <source>
        <dbReference type="PDB" id="5GUG"/>
    </source>
</evidence>
<evidence type="ECO:0007744" key="40">
    <source>
        <dbReference type="PDB" id="5X9Z"/>
    </source>
</evidence>
<evidence type="ECO:0007744" key="41">
    <source>
        <dbReference type="PDB" id="5XA0"/>
    </source>
</evidence>
<evidence type="ECO:0007744" key="42">
    <source>
        <dbReference type="PDB" id="5XA1"/>
    </source>
</evidence>
<evidence type="ECO:0007744" key="43">
    <source>
    </source>
</evidence>
<evidence type="ECO:0007744" key="44">
    <source>
    </source>
</evidence>
<evidence type="ECO:0007744" key="45">
    <source>
    </source>
</evidence>
<evidence type="ECO:0007829" key="46">
    <source>
        <dbReference type="PDB" id="1N4K"/>
    </source>
</evidence>
<evidence type="ECO:0007829" key="47">
    <source>
        <dbReference type="PDB" id="1XZZ"/>
    </source>
</evidence>
<protein>
    <recommendedName>
        <fullName evidence="31">Inositol 1,4,5-trisphosphate-gated calcium channel ITPR1</fullName>
    </recommendedName>
    <alternativeName>
        <fullName>IP3 receptor isoform 1</fullName>
        <shortName>IP3R 1</shortName>
        <shortName evidence="3">InsP3R1</shortName>
    </alternativeName>
    <alternativeName>
        <fullName evidence="28">Inositol 1,4,5 trisphosphate receptor</fullName>
    </alternativeName>
    <alternativeName>
        <fullName evidence="27">Inositol 1,4,5-trisphosphate receptor type 1</fullName>
    </alternativeName>
    <alternativeName>
        <fullName evidence="29">Inositol 1,4,5-trisphosphate-binding protein P400</fullName>
    </alternativeName>
    <alternativeName>
        <fullName evidence="35">Protein PCD-6</fullName>
    </alternativeName>
    <alternativeName>
        <fullName>Purkinje cell protein 1</fullName>
    </alternativeName>
    <alternativeName>
        <fullName evidence="26">Type 1 inositol 1,4,5-trisphosphate receptor</fullName>
        <shortName>Type 1 InsP3 receptor</shortName>
    </alternativeName>
</protein>
<accession>P11881</accession>
<accession>P20943</accession>
<accession>Q99LG5</accession>
<organism>
    <name type="scientific">Mus musculus</name>
    <name type="common">Mouse</name>
    <dbReference type="NCBI Taxonomy" id="10090"/>
    <lineage>
        <taxon>Eukaryota</taxon>
        <taxon>Metazoa</taxon>
        <taxon>Chordata</taxon>
        <taxon>Craniata</taxon>
        <taxon>Vertebrata</taxon>
        <taxon>Euteleostomi</taxon>
        <taxon>Mammalia</taxon>
        <taxon>Eutheria</taxon>
        <taxon>Euarchontoglires</taxon>
        <taxon>Glires</taxon>
        <taxon>Rodentia</taxon>
        <taxon>Myomorpha</taxon>
        <taxon>Muroidea</taxon>
        <taxon>Muridae</taxon>
        <taxon>Murinae</taxon>
        <taxon>Mus</taxon>
        <taxon>Mus</taxon>
    </lineage>
</organism>
<proteinExistence type="evidence at protein level"/>
<reference key="1">
    <citation type="journal article" date="1989" name="Nature">
        <title>Primary structure and functional expression of the inositol 1,4,5-trisphosphate-binding protein P400.</title>
        <authorList>
            <person name="Furuichi T."/>
            <person name="Yoshikawa S."/>
            <person name="Miyawaki A."/>
            <person name="Wada K."/>
            <person name="Maeda N."/>
            <person name="Mikoshiba K."/>
        </authorList>
    </citation>
    <scope>NUCLEOTIDE SEQUENCE [MRNA] (ISOFORM 1)</scope>
    <scope>FUNCTION</scope>
    <source>
        <tissue>Purkinje cell</tissue>
    </source>
</reference>
<reference key="2">
    <citation type="journal article" date="1989" name="Nucleic Acids Res.">
        <title>Nucleotide sequence of cDNA encoding P400 protein in the mouse cerebellum.</title>
        <authorList>
            <person name="Furuichi T."/>
            <person name="Yoshikawa S."/>
            <person name="Mikoshiba K."/>
        </authorList>
    </citation>
    <scope>NUCLEOTIDE SEQUENCE [MRNA] (ISOFORM 1)</scope>
    <source>
        <strain>ICR</strain>
        <tissue>Cerebellum</tissue>
    </source>
</reference>
<reference key="3">
    <citation type="journal article" date="2009" name="PLoS Biol.">
        <title>Lineage-specific biology revealed by a finished genome assembly of the mouse.</title>
        <authorList>
            <person name="Church D.M."/>
            <person name="Goodstadt L."/>
            <person name="Hillier L.W."/>
            <person name="Zody M.C."/>
            <person name="Goldstein S."/>
            <person name="She X."/>
            <person name="Bult C.J."/>
            <person name="Agarwala R."/>
            <person name="Cherry J.L."/>
            <person name="DiCuccio M."/>
            <person name="Hlavina W."/>
            <person name="Kapustin Y."/>
            <person name="Meric P."/>
            <person name="Maglott D."/>
            <person name="Birtle Z."/>
            <person name="Marques A.C."/>
            <person name="Graves T."/>
            <person name="Zhou S."/>
            <person name="Teague B."/>
            <person name="Potamousis K."/>
            <person name="Churas C."/>
            <person name="Place M."/>
            <person name="Herschleb J."/>
            <person name="Runnheim R."/>
            <person name="Forrest D."/>
            <person name="Amos-Landgraf J."/>
            <person name="Schwartz D.C."/>
            <person name="Cheng Z."/>
            <person name="Lindblad-Toh K."/>
            <person name="Eichler E.E."/>
            <person name="Ponting C.P."/>
        </authorList>
    </citation>
    <scope>NUCLEOTIDE SEQUENCE [LARGE SCALE GENOMIC DNA]</scope>
    <source>
        <strain>C57BL/6J</strain>
    </source>
</reference>
<reference key="4">
    <citation type="journal article" date="1991" name="Proc. Natl. Acad. Sci. U.S.A.">
        <title>The subtypes of the mouse inositol 1,4,5-trisphosphate receptor are expressed in a tissue-specific and developmentally specific manner.</title>
        <authorList>
            <person name="Nakagawa T."/>
            <person name="Okano H."/>
            <person name="Furuichi T."/>
            <person name="Aruga J."/>
            <person name="Mikoshiba K."/>
        </authorList>
    </citation>
    <scope>NUCLEOTIDE SEQUENCE [GENOMIC DNA] OF 318-332 AND 1692-1731</scope>
    <scope>ALTERNATIVE SPLICING</scope>
    <source>
        <strain>ICR</strain>
    </source>
</reference>
<reference key="5">
    <citation type="submission" date="2007-04" db="UniProtKB">
        <authorList>
            <person name="Lubec G."/>
            <person name="Kang S.U."/>
        </authorList>
    </citation>
    <scope>PROTEIN SEQUENCE OF 862-871</scope>
    <scope>IDENTIFICATION BY MASS SPECTROMETRY</scope>
    <source>
        <strain>C57BL/6J</strain>
        <tissue>Brain</tissue>
    </source>
</reference>
<reference key="6">
    <citation type="journal article" date="2004" name="Genome Res.">
        <title>The status, quality, and expansion of the NIH full-length cDNA project: the Mammalian Gene Collection (MGC).</title>
        <authorList>
            <consortium name="The MGC Project Team"/>
        </authorList>
    </citation>
    <scope>NUCLEOTIDE SEQUENCE [LARGE SCALE MRNA] OF 2098-2749</scope>
</reference>
<reference key="7">
    <citation type="journal article" date="1988" name="J. Neurosci.">
        <title>cDNA cloning and characterization of three genes uniquely expressed in cerebellum by Purkinje neurons.</title>
        <authorList>
            <person name="Nordquist D.T."/>
            <person name="Kozak C.A."/>
            <person name="Orr H.T."/>
        </authorList>
    </citation>
    <scope>NUCLEOTIDE SEQUENCE [MRNA] OF 2250-2749</scope>
    <source>
        <strain>C57BL/6J</strain>
        <tissue>Cerebellum</tissue>
    </source>
</reference>
<reference key="8">
    <citation type="journal article" date="2000" name="Biochem. J.">
        <title>Ca2+-calmodulin inhibits Ca2+ release mediated by type-1, -2 and -3 inositol trisphosphate receptors.</title>
        <authorList>
            <person name="Adkins C.E."/>
            <person name="Morris S.A."/>
            <person name="De Smedt H."/>
            <person name="Sienaert I."/>
            <person name="Toeroek K."/>
            <person name="Taylor C.W."/>
        </authorList>
    </citation>
    <scope>INTERACTION WITH CALM1</scope>
</reference>
<reference key="9">
    <citation type="journal article" date="2002" name="Biochem. J.">
        <title>Localization and function of a calmodulin-apocalmodulin-binding domain in the N-terminal part of the type 1 inositol 1,4,5-trisphosphate receptor.</title>
        <authorList>
            <person name="Sienaert I."/>
            <person name="Nadif Kasri N."/>
            <person name="Vanlingen S."/>
            <person name="Parys J.B."/>
            <person name="Callewaert G."/>
            <person name="Missiaen L."/>
            <person name="de Smedt H."/>
        </authorList>
    </citation>
    <scope>FUNCTION</scope>
    <scope>TRANSPORTER ACTIVITY</scope>
    <scope>INTERACTION WITH CALM1</scope>
</reference>
<reference key="10">
    <citation type="journal article" date="2003" name="J. Biol. Chem.">
        <title>IRBIT, a novel inositol 1,4,5-trisphosphate (IP3) receptor-binding protein, is released from the IP3 receptor upon IP3 binding to the receptor.</title>
        <authorList>
            <person name="Ando H."/>
            <person name="Mizutani A."/>
            <person name="Matsu-ura T."/>
            <person name="Mikoshiba K."/>
        </authorList>
    </citation>
    <scope>INTERACTION WITH AHCYL1</scope>
</reference>
<reference key="11">
    <citation type="journal article" date="2005" name="Cell">
        <title>Subtype-specific and ER lumenal environment-dependent regulation of inositol 1,4,5-trisphosphate receptor type 1 by ERp44.</title>
        <authorList>
            <person name="Higo T."/>
            <person name="Hattori M."/>
            <person name="Nakamura T."/>
            <person name="Natsume T."/>
            <person name="Michikawa T."/>
            <person name="Mikoshiba K."/>
        </authorList>
    </citation>
    <scope>INTERACTION WITH ERP44</scope>
    <scope>MUTAGENESIS OF CYS-2496; CYS-2504 AND CYS-2527</scope>
</reference>
<reference key="12">
    <citation type="journal article" date="2006" name="Biochem. Biophys. Res. Commun.">
        <title>Binding of IRBIT to the IP3 receptor: determinants and functional effects.</title>
        <authorList>
            <person name="Devogelaere B."/>
            <person name="Nadif Kasri N."/>
            <person name="Derua R."/>
            <person name="Waelkens E."/>
            <person name="Callewaert G."/>
            <person name="Missiaen L."/>
            <person name="Parys J.B."/>
            <person name="De Smedt H."/>
        </authorList>
    </citation>
    <scope>INTERACTION WITH AHCYL1</scope>
</reference>
<reference key="13">
    <citation type="journal article" date="2007" name="Blood">
        <title>IRAG mediates NO/cGMP-dependent inhibition of platelet aggregation and thrombus formation.</title>
        <authorList>
            <person name="Antl M."/>
            <person name="von Bruehl M.-L."/>
            <person name="Eiglsperger C."/>
            <person name="Werner M."/>
            <person name="Konrad I."/>
            <person name="Kocher T."/>
            <person name="Wilm M."/>
            <person name="Hofmann F."/>
            <person name="Massberg S."/>
            <person name="Schlossmann J."/>
        </authorList>
    </citation>
    <scope>INTERACTION WITH IRAG1</scope>
</reference>
<reference key="14">
    <citation type="journal article" date="2007" name="Mol. Cell. Proteomics">
        <title>Mitochondrial phosphoproteome revealed by an improved IMAC method and MS/MS/MS.</title>
        <authorList>
            <person name="Lee J."/>
            <person name="Xu Y."/>
            <person name="Chen Y."/>
            <person name="Sprung R."/>
            <person name="Kim S.C."/>
            <person name="Xie S."/>
            <person name="Zhao Y."/>
        </authorList>
    </citation>
    <scope>PHOSPHORYLATION [LARGE SCALE ANALYSIS] AT SER-1588</scope>
    <scope>IDENTIFICATION BY MASS SPECTROMETRY [LARGE SCALE ANALYSIS]</scope>
    <source>
        <tissue>Liver</tissue>
    </source>
</reference>
<reference key="15">
    <citation type="journal article" date="2008" name="J. Proteome Res.">
        <title>Specific phosphopeptide enrichment with immobilized titanium ion affinity chromatography adsorbent for phosphoproteome analysis.</title>
        <authorList>
            <person name="Zhou H."/>
            <person name="Ye M."/>
            <person name="Dong J."/>
            <person name="Han G."/>
            <person name="Jiang X."/>
            <person name="Wu R."/>
            <person name="Zou H."/>
        </authorList>
    </citation>
    <scope>PHOSPHORYLATION [LARGE SCALE ANALYSIS] AT SER-1588</scope>
    <scope>IDENTIFICATION BY MASS SPECTROMETRY [LARGE SCALE ANALYSIS]</scope>
    <source>
        <tissue>Liver</tissue>
    </source>
</reference>
<reference key="16">
    <citation type="journal article" date="2009" name="J. Cell Biol.">
        <title>Role of ERO1-alpha-mediated stimulation of inositol 1,4,5-triphosphate receptor activity in endoplasmic reticulum stress-induced apoptosis.</title>
        <authorList>
            <person name="Li G."/>
            <person name="Mongillo M."/>
            <person name="Chin K.T."/>
            <person name="Harding H."/>
            <person name="Ron D."/>
            <person name="Marks A.R."/>
            <person name="Tabas I."/>
        </authorList>
    </citation>
    <scope>FUNCTION</scope>
</reference>
<reference key="17">
    <citation type="journal article" date="2010" name="Cell">
        <title>A tissue-specific atlas of mouse protein phosphorylation and expression.</title>
        <authorList>
            <person name="Huttlin E.L."/>
            <person name="Jedrychowski M.P."/>
            <person name="Elias J.E."/>
            <person name="Goswami T."/>
            <person name="Rad R."/>
            <person name="Beausoleil S.A."/>
            <person name="Villen J."/>
            <person name="Haas W."/>
            <person name="Sowa M.E."/>
            <person name="Gygi S.P."/>
        </authorList>
    </citation>
    <scope>PHOSPHORYLATION [LARGE SCALE ANALYSIS] AT SER-1588</scope>
    <scope>IDENTIFICATION BY MASS SPECTROMETRY [LARGE SCALE ANALYSIS]</scope>
    <source>
        <tissue>Brain</tissue>
        <tissue>Brown adipose tissue</tissue>
        <tissue>Heart</tissue>
        <tissue>Kidney</tissue>
        <tissue>Liver</tissue>
        <tissue>Lung</tissue>
        <tissue>Pancreas</tissue>
        <tissue>Spleen</tissue>
        <tissue>Testis</tissue>
    </source>
</reference>
<reference key="18">
    <citation type="journal article" date="2010" name="J. Biol. Chem.">
        <title>Tyr-167/Trp-168 in type 1/3 inositol 1,4,5-trisphosphate receptor mediates functional coupling between ligand binding and channel opening.</title>
        <authorList>
            <person name="Yamazaki H."/>
            <person name="Chan J."/>
            <person name="Ikura M."/>
            <person name="Michikawa T."/>
            <person name="Mikoshiba K."/>
        </authorList>
    </citation>
    <scope>FUNCTION</scope>
    <scope>TRANSPORTER ACTIVITY</scope>
    <scope>MUTAGENESIS OF TYR-167; LYS-168 AND LEU-169</scope>
</reference>
<reference key="19">
    <citation type="journal article" date="2012" name="FEBS Open Bio">
        <title>Tespa1 is a novel inositol 1,4,5-trisphosphate receptor binding protein in T and B lymphocytes.</title>
        <authorList>
            <person name="Matsuzaki H."/>
            <person name="Fujimoto T."/>
            <person name="Ota T."/>
            <person name="Ogawa M."/>
            <person name="Tsunoda T."/>
            <person name="Doi K."/>
            <person name="Hamabashiri M."/>
            <person name="Tanaka M."/>
            <person name="Shirasawa S."/>
        </authorList>
    </citation>
    <scope>INTERACTION WITH TESPA1</scope>
</reference>
<reference key="20">
    <citation type="journal article" date="2013" name="Gastroenterology">
        <title>Irbit mediates synergy between ca(2+) and cAMP signaling pathways during epithelial transport in mice.</title>
        <authorList>
            <person name="Park S."/>
            <person name="Shcheynikov N."/>
            <person name="Hong J.H."/>
            <person name="Zheng C."/>
            <person name="Suh S.H."/>
            <person name="Kawaai K."/>
            <person name="Ando H."/>
            <person name="Mizutani A."/>
            <person name="Abe T."/>
            <person name="Kiyonari H."/>
            <person name="Seki G."/>
            <person name="Yule D."/>
            <person name="Mikoshiba K."/>
            <person name="Muallem S."/>
        </authorList>
    </citation>
    <scope>INTERACTION WITH AHCYL1</scope>
    <scope>MUTAGENESIS OF SER-1588 AND SER-1755</scope>
    <scope>PHOSPHORYLATION</scope>
    <scope>FUNCTION</scope>
</reference>
<reference key="21">
    <citation type="journal article" date="2013" name="J. Biol. Chem.">
        <title>The Bcl-2 protein family member Bok binds to the coupling domain of inositol 1,4,5-trisphosphate receptors and protects them from proteolytic cleavage.</title>
        <authorList>
            <person name="Schulman J.J."/>
            <person name="Wright F.A."/>
            <person name="Kaufmann T."/>
            <person name="Wojcikiewicz R.J."/>
        </authorList>
    </citation>
    <scope>INTERACTION WITH BOK</scope>
</reference>
<reference key="22">
    <citation type="journal article" date="2014" name="Dev. Biol.">
        <title>The role of MATER in endoplasmic reticulum distribution and calcium homeostasis in mouse oocytes.</title>
        <authorList>
            <person name="Kim B."/>
            <person name="Zhang X."/>
            <person name="Kan R."/>
            <person name="Cohen R."/>
            <person name="Mukai C."/>
            <person name="Travis A.J."/>
            <person name="Coonrod S.A."/>
        </authorList>
    </citation>
    <scope>SUBCELLULAR LOCATION</scope>
</reference>
<reference key="23">
    <citation type="journal article" date="2014" name="Proc. Natl. Acad. Sci. U.S.A.">
        <title>Stable expression and function of the inositol 1,4,5-triphosphate receptor requires palmitoylation by a DHHC6/selenoprotein K complex.</title>
        <authorList>
            <person name="Fredericks G.J."/>
            <person name="Hoffmann F.W."/>
            <person name="Rose A.H."/>
            <person name="Osterheld H.J."/>
            <person name="Hess F.M."/>
            <person name="Mercier F."/>
            <person name="Hoffmann P.R."/>
        </authorList>
    </citation>
    <scope>PALMITOYLATION AT CYS-56 AND CYS-849</scope>
    <scope>MUTAGENESIS OF CYS-56; CYS-849 AND CYS-2215</scope>
</reference>
<reference key="24">
    <citation type="journal article" date="2018" name="BMC Nephrol.">
        <title>IP3R-Grp75-VDAC1-MCU calcium regulation axis antagonists protect podocytes from apoptosis and decrease proteinuria in an Adriamycin nephropathy rat model.</title>
        <authorList>
            <person name="Xu H."/>
            <person name="Guan N."/>
            <person name="Ren Y.L."/>
            <person name="Wei Q.J."/>
            <person name="Tao Y.H."/>
            <person name="Yang G.S."/>
            <person name="Liu X.Y."/>
            <person name="Bu D.F."/>
            <person name="Zhang Y."/>
            <person name="Zhu S.N."/>
        </authorList>
    </citation>
    <scope>FUNCTION</scope>
    <scope>INTERACTION WITH HSPA9</scope>
</reference>
<reference key="25">
    <citation type="journal article" date="2022" name="J. Biol. Chem.">
        <title>Binding of the erlin1/2 complex to the third intralumenal loop of IP3R1 triggers its ubiquitin-proteasomal degradation.</title>
        <authorList>
            <person name="Gao X."/>
            <person name="Bonzerato C.G."/>
            <person name="Wojcikiewicz R.J.H."/>
        </authorList>
    </citation>
    <scope>FUNCTION</scope>
    <scope>TRANSPORTER ACTIVITY</scope>
    <scope>SUBUNIT</scope>
    <scope>INTERACTION WITH ERLIN1; ERLIN2 AND RNF170</scope>
    <scope>MUTAGENESIS OF 2463-LYS-ASP-2464; 2464-ASP-ASP-2465; 2465-ASP--ILE-2467; ASP-2465; 2468-LEU--VAL-2470; ASP-2471; 2471-ASP-ARG-2472; ARG-2472; ASP-2550 AND ARG-2596</scope>
    <scope>POLYUBIQUITINATION</scope>
</reference>
<reference key="26">
    <citation type="journal article" date="2023" name="Elife">
        <title>Zn2+ is essential for Ca2+ oscillations in mouse eggs.</title>
        <authorList>
            <person name="Akizawa H."/>
            <person name="Lopes E.M."/>
            <person name="Fissore R.A."/>
        </authorList>
    </citation>
    <scope>FUNCTION</scope>
    <scope>TRANSPORTER ACTIVITY</scope>
    <scope>ACTIVITY REGULATION</scope>
</reference>
<reference evidence="37" key="27">
    <citation type="journal article" date="2002" name="Nature">
        <title>Structure of the inositol 1,4,5-trisphosphate receptor binding core in complex with its ligand.</title>
        <authorList>
            <person name="Bosanac I."/>
            <person name="Alattia J.R."/>
            <person name="Mal T.K."/>
            <person name="Chan J."/>
            <person name="Talarico S."/>
            <person name="Tong F.K."/>
            <person name="Tong K.I."/>
            <person name="Yoshikawa F."/>
            <person name="Furuichi T."/>
            <person name="Iwai M."/>
            <person name="Michikawa T."/>
            <person name="Mikoshiba K."/>
            <person name="Ikura M."/>
        </authorList>
    </citation>
    <scope>X-RAY CRYSTALLOGRAPHY (2.20 ANGSTROMS) OF 224-604 IN COMPLEX WITH INOSITOL 1,4,5-TRISPHOSPHATE</scope>
    <scope>MUTAGENESIS OF THR-267 AND TYR-567</scope>
</reference>
<reference evidence="38" key="28">
    <citation type="journal article" date="2005" name="Mol. Cell">
        <title>Crystal structure of the ligand binding suppressor domain of type 1 inositol 1,4,5-trisphosphate receptor.</title>
        <authorList>
            <person name="Bosanac I."/>
            <person name="Yamazaki H."/>
            <person name="Matsu-Ura T."/>
            <person name="Michikawa T."/>
            <person name="Mikoshiba K."/>
            <person name="Ikura M."/>
        </authorList>
    </citation>
    <scope>X-RAY CRYSTALLOGRAPHY (1.8 ANGSTROMS) OF 2-223</scope>
</reference>
<reference evidence="39 40 41 42" key="29">
    <citation type="journal article" date="2017" name="Proc. Natl. Acad. Sci. U.S.A.">
        <title>IP3-mediated gating mechanism of the IP3 receptor revealed by mutagenesis and X-ray crystallography.</title>
        <authorList>
            <person name="Hamada K."/>
            <person name="Miyatake H."/>
            <person name="Terauchi A."/>
            <person name="Mikoshiba K."/>
        </authorList>
    </citation>
    <scope>X-RAY CRYSTALLOGRAPHY (5.81 ANGSTROMS) OF 1-1581 IN COMPLEX WITH D-MYO-INOSITOL-1,4,5-TRIPHOSPHATE</scope>
    <scope>FUNCTION</scope>
    <scope>TRANSPORTER ACTIVITY</scope>
    <scope>SUBUNIT</scope>
    <scope>SUBCELLULAR LOCATION</scope>
</reference>
<name>ITPR1_MOUSE</name>
<feature type="chain" id="PRO_0000153921" description="Inositol 1,4,5-trisphosphate-gated calcium channel ITPR1">
    <location>
        <begin position="1"/>
        <end position="2749"/>
    </location>
</feature>
<feature type="topological domain" description="Cytoplasmic" evidence="1 5">
    <location>
        <begin position="1"/>
        <end position="2273"/>
    </location>
</feature>
<feature type="transmembrane region" description="Helical" evidence="1 5">
    <location>
        <begin position="2274"/>
        <end position="2294"/>
    </location>
</feature>
<feature type="topological domain" description="Lumenal" evidence="1 5">
    <location>
        <begin position="2295"/>
        <end position="2305"/>
    </location>
</feature>
<feature type="transmembrane region" description="Helical" evidence="1 5">
    <location>
        <begin position="2306"/>
        <end position="2326"/>
    </location>
</feature>
<feature type="topological domain" description="Cytoplasmic" evidence="1 5">
    <location>
        <begin position="2327"/>
        <end position="2352"/>
    </location>
</feature>
<feature type="transmembrane region" description="Helical" evidence="1 5">
    <location>
        <begin position="2353"/>
        <end position="2373"/>
    </location>
</feature>
<feature type="topological domain" description="Lumenal" evidence="1 5">
    <location>
        <begin position="2374"/>
        <end position="2396"/>
    </location>
</feature>
<feature type="transmembrane region" description="Helical" evidence="1 5">
    <location>
        <begin position="2397"/>
        <end position="2417"/>
    </location>
</feature>
<feature type="topological domain" description="Cytoplasmic" evidence="1 5">
    <location>
        <begin position="2418"/>
        <end position="2439"/>
    </location>
</feature>
<feature type="transmembrane region" description="Helical" evidence="1 5">
    <location>
        <begin position="2440"/>
        <end position="2460"/>
    </location>
</feature>
<feature type="topological domain" description="Lumenal" evidence="1 5">
    <location>
        <begin position="2461"/>
        <end position="2569"/>
    </location>
</feature>
<feature type="transmembrane region" description="Helical" evidence="1 5">
    <location>
        <begin position="2570"/>
        <end position="2590"/>
    </location>
</feature>
<feature type="topological domain" description="Cytoplasmic" evidence="1 5">
    <location>
        <begin position="2591"/>
        <end position="2749"/>
    </location>
</feature>
<feature type="domain" description="MIR 1" evidence="6">
    <location>
        <begin position="112"/>
        <end position="166"/>
    </location>
</feature>
<feature type="domain" description="MIR 2" evidence="6">
    <location>
        <begin position="173"/>
        <end position="223"/>
    </location>
</feature>
<feature type="domain" description="MIR 3" evidence="6">
    <location>
        <begin position="231"/>
        <end position="287"/>
    </location>
</feature>
<feature type="domain" description="MIR 4" evidence="6">
    <location>
        <begin position="294"/>
        <end position="373"/>
    </location>
</feature>
<feature type="domain" description="MIR 5" evidence="6">
    <location>
        <begin position="379"/>
        <end position="435"/>
    </location>
</feature>
<feature type="region of interest" description="Disordered" evidence="7">
    <location>
        <begin position="1005"/>
        <end position="1026"/>
    </location>
</feature>
<feature type="region of interest" description="Disordered" evidence="7">
    <location>
        <begin position="1136"/>
        <end position="1167"/>
    </location>
</feature>
<feature type="region of interest" description="Disordered" evidence="7">
    <location>
        <begin position="1695"/>
        <end position="1730"/>
    </location>
</feature>
<feature type="region of interest" description="Disordered" evidence="7">
    <location>
        <begin position="1751"/>
        <end position="1788"/>
    </location>
</feature>
<feature type="region of interest" description="Disordered" evidence="7">
    <location>
        <begin position="1881"/>
        <end position="1906"/>
    </location>
</feature>
<feature type="region of interest" description="Disordered" evidence="7">
    <location>
        <begin position="1932"/>
        <end position="1952"/>
    </location>
</feature>
<feature type="region of interest" description="Interaction with ERP44" evidence="12">
    <location>
        <begin position="2463"/>
        <end position="2528"/>
    </location>
</feature>
<feature type="region of interest" description="Disordered" evidence="7">
    <location>
        <begin position="2721"/>
        <end position="2749"/>
    </location>
</feature>
<feature type="compositionally biased region" description="Low complexity" evidence="7">
    <location>
        <begin position="1005"/>
        <end position="1020"/>
    </location>
</feature>
<feature type="compositionally biased region" description="Basic and acidic residues" evidence="7">
    <location>
        <begin position="1149"/>
        <end position="1167"/>
    </location>
</feature>
<feature type="compositionally biased region" description="Low complexity" evidence="7">
    <location>
        <begin position="1758"/>
        <end position="1768"/>
    </location>
</feature>
<feature type="compositionally biased region" description="Gly residues" evidence="7">
    <location>
        <begin position="1770"/>
        <end position="1780"/>
    </location>
</feature>
<feature type="compositionally biased region" description="Basic and acidic residues" evidence="7">
    <location>
        <begin position="1882"/>
        <end position="1896"/>
    </location>
</feature>
<feature type="binding site" evidence="10 22 37 39 42">
    <location>
        <position position="265"/>
    </location>
    <ligand>
        <name>1D-myo-inositol 1,4,5-trisphosphate</name>
        <dbReference type="ChEBI" id="CHEBI:203600"/>
    </ligand>
</feature>
<feature type="binding site" evidence="10 22 37 39 42">
    <location>
        <position position="267"/>
    </location>
    <ligand>
        <name>1D-myo-inositol 1,4,5-trisphosphate</name>
        <dbReference type="ChEBI" id="CHEBI:203600"/>
    </ligand>
</feature>
<feature type="binding site" evidence="10 22 37 39 42">
    <location>
        <position position="268"/>
    </location>
    <ligand>
        <name>1D-myo-inositol 1,4,5-trisphosphate</name>
        <dbReference type="ChEBI" id="CHEBI:203600"/>
    </ligand>
</feature>
<feature type="binding site" evidence="10 22 37 39 42">
    <location>
        <position position="269"/>
    </location>
    <ligand>
        <name>1D-myo-inositol 1,4,5-trisphosphate</name>
        <dbReference type="ChEBI" id="CHEBI:203600"/>
    </ligand>
</feature>
<feature type="binding site" evidence="10 22 37 39 42">
    <location>
        <position position="508"/>
    </location>
    <ligand>
        <name>1D-myo-inositol 1,4,5-trisphosphate</name>
        <dbReference type="ChEBI" id="CHEBI:203600"/>
    </ligand>
</feature>
<feature type="binding site" evidence="10 37">
    <location>
        <position position="511"/>
    </location>
    <ligand>
        <name>1D-myo-inositol 1,4,5-trisphosphate</name>
        <dbReference type="ChEBI" id="CHEBI:203600"/>
    </ligand>
</feature>
<feature type="binding site" evidence="10 22 37 39 42">
    <location>
        <position position="567"/>
    </location>
    <ligand>
        <name>1D-myo-inositol 1,4,5-trisphosphate</name>
        <dbReference type="ChEBI" id="CHEBI:203600"/>
    </ligand>
</feature>
<feature type="binding site" evidence="10 22 37 39 42">
    <location>
        <position position="568"/>
    </location>
    <ligand>
        <name>1D-myo-inositol 1,4,5-trisphosphate</name>
        <dbReference type="ChEBI" id="CHEBI:203600"/>
    </ligand>
</feature>
<feature type="binding site" evidence="2">
    <location>
        <position position="747"/>
    </location>
    <ligand>
        <name>Ca(2+)</name>
        <dbReference type="ChEBI" id="CHEBI:29108"/>
        <label>1</label>
        <note>low affinity</note>
    </ligand>
</feature>
<feature type="binding site" evidence="2">
    <location>
        <position position="1127"/>
    </location>
    <ligand>
        <name>Ca(2+)</name>
        <dbReference type="ChEBI" id="CHEBI:29108"/>
        <label>1</label>
        <note>low affinity</note>
    </ligand>
</feature>
<feature type="binding site" evidence="2">
    <location>
        <position position="1130"/>
    </location>
    <ligand>
        <name>Ca(2+)</name>
        <dbReference type="ChEBI" id="CHEBI:29108"/>
        <label>1</label>
        <note>low affinity</note>
    </ligand>
</feature>
<feature type="binding site" evidence="2">
    <location>
        <position position="1977"/>
    </location>
    <ligand>
        <name>Ca(2+)</name>
        <dbReference type="ChEBI" id="CHEBI:29108"/>
        <label>2</label>
        <note>high affinity</note>
    </ligand>
</feature>
<feature type="binding site" evidence="2">
    <location>
        <position position="2041"/>
    </location>
    <ligand>
        <name>Ca(2+)</name>
        <dbReference type="ChEBI" id="CHEBI:29108"/>
        <label>2</label>
        <note>high affinity</note>
    </ligand>
</feature>
<feature type="binding site" evidence="1">
    <location>
        <position position="2220"/>
    </location>
    <ligand>
        <name>ATP</name>
        <dbReference type="ChEBI" id="CHEBI:30616"/>
    </ligand>
</feature>
<feature type="binding site" evidence="1">
    <location>
        <position position="2223"/>
    </location>
    <ligand>
        <name>ATP</name>
        <dbReference type="ChEBI" id="CHEBI:30616"/>
    </ligand>
</feature>
<feature type="binding site" evidence="1">
    <location>
        <position position="2610"/>
    </location>
    <ligand>
        <name>ATP</name>
        <dbReference type="ChEBI" id="CHEBI:30616"/>
    </ligand>
</feature>
<feature type="binding site" evidence="1">
    <location>
        <position position="2610"/>
    </location>
    <ligand>
        <name>Zn(2+)</name>
        <dbReference type="ChEBI" id="CHEBI:29105"/>
    </ligand>
</feature>
<feature type="binding site" evidence="1">
    <location>
        <position position="2611"/>
    </location>
    <ligand>
        <name>ATP</name>
        <dbReference type="ChEBI" id="CHEBI:30616"/>
    </ligand>
</feature>
<feature type="binding site" evidence="1">
    <location>
        <position position="2613"/>
    </location>
    <ligand>
        <name>Zn(2+)</name>
        <dbReference type="ChEBI" id="CHEBI:29105"/>
    </ligand>
</feature>
<feature type="binding site" evidence="1">
    <location>
        <position position="2630"/>
    </location>
    <ligand>
        <name>Zn(2+)</name>
        <dbReference type="ChEBI" id="CHEBI:29105"/>
    </ligand>
</feature>
<feature type="binding site" evidence="1">
    <location>
        <position position="2635"/>
    </location>
    <ligand>
        <name>ATP</name>
        <dbReference type="ChEBI" id="CHEBI:30616"/>
    </ligand>
</feature>
<feature type="binding site" evidence="1">
    <location>
        <position position="2635"/>
    </location>
    <ligand>
        <name>Zn(2+)</name>
        <dbReference type="ChEBI" id="CHEBI:29105"/>
    </ligand>
</feature>
<feature type="binding site" evidence="1">
    <location>
        <position position="2637"/>
    </location>
    <ligand>
        <name>ATP</name>
        <dbReference type="ChEBI" id="CHEBI:30616"/>
    </ligand>
</feature>
<feature type="binding site" evidence="2">
    <location>
        <position position="2653"/>
    </location>
    <ligand>
        <name>Ca(2+)</name>
        <dbReference type="ChEBI" id="CHEBI:29108"/>
        <label>2</label>
        <note>high affinity</note>
    </ligand>
</feature>
<feature type="modified residue" description="Phosphoserine" evidence="43 44 45">
    <location>
        <position position="1588"/>
    </location>
</feature>
<feature type="modified residue" description="Phosphoserine; by PKA" evidence="1">
    <location>
        <position position="1755"/>
    </location>
</feature>
<feature type="lipid moiety-binding region" description="S-palmitoyl cysteine" evidence="20">
    <location>
        <position position="56"/>
    </location>
</feature>
<feature type="lipid moiety-binding region" description="S-palmitoyl cysteine" evidence="20">
    <location>
        <position position="849"/>
    </location>
</feature>
<feature type="disulfide bond" evidence="1">
    <location>
        <begin position="2527"/>
        <end position="2533"/>
    </location>
</feature>
<feature type="cross-link" description="Glycyl lysine isopeptide (Lys-Gly) (interchain with G-Cter in ubiquitin)" evidence="1">
    <location>
        <position position="916"/>
    </location>
</feature>
<feature type="cross-link" description="Glycyl lysine isopeptide (Lys-Gly) (interchain with G-Cter in ubiquitin)" evidence="1">
    <location>
        <position position="962"/>
    </location>
</feature>
<feature type="cross-link" description="Glycyl lysine isopeptide (Lys-Gly) (interchain with G-Cter in ubiquitin)" evidence="1">
    <location>
        <position position="1571"/>
    </location>
</feature>
<feature type="cross-link" description="Glycyl lysine isopeptide (Lys-Gly) (interchain with G-Cter in ubiquitin)" evidence="1">
    <location>
        <position position="1771"/>
    </location>
</feature>
<feature type="cross-link" description="Glycyl lysine isopeptide (Lys-Gly) (interchain with G-Cter in ubiquitin)" evidence="1">
    <location>
        <position position="1884"/>
    </location>
</feature>
<feature type="cross-link" description="Glycyl lysine isopeptide (Lys-Gly) (interchain with G-Cter in ubiquitin)" evidence="1">
    <location>
        <position position="1885"/>
    </location>
</feature>
<feature type="cross-link" description="Glycyl lysine isopeptide (Lys-Gly) (interchain with G-Cter in ubiquitin)" evidence="1">
    <location>
        <position position="1886"/>
    </location>
</feature>
<feature type="cross-link" description="Glycyl lysine isopeptide (Lys-Gly) (interchain with G-Cter in ubiquitin)" evidence="1">
    <location>
        <position position="1901"/>
    </location>
</feature>
<feature type="cross-link" description="Glycyl lysine isopeptide (Lys-Gly) (interchain with G-Cter in ubiquitin)" evidence="1">
    <location>
        <position position="1924"/>
    </location>
</feature>
<feature type="cross-link" description="Glycyl lysine isopeptide (Lys-Gly) (interchain with G-Cter in ubiquitin)" evidence="1">
    <location>
        <position position="2118"/>
    </location>
</feature>
<feature type="cross-link" description="Glycyl lysine isopeptide (Lys-Gly) (interchain with G-Cter in ubiquitin)" evidence="1">
    <location>
        <position position="2257"/>
    </location>
</feature>
<feature type="splice variant" id="VSP_002691" description="In isoform 2, isoform 4, isoform 6 and isoform 8." evidence="31">
    <location>
        <begin position="318"/>
        <end position="332"/>
    </location>
</feature>
<feature type="splice variant" id="VSP_002692" description="In isoform 7 and isoform 8." evidence="31">
    <location>
        <begin position="1692"/>
        <end position="1714"/>
    </location>
</feature>
<feature type="splice variant" id="VSP_002693" description="In isoform 3, isoform 4, isoform 5, isoform 6, isoform 7 and isoform 8." evidence="31">
    <location>
        <position position="1715"/>
    </location>
</feature>
<feature type="splice variant" id="VSP_002694" description="In isoform 5, isoform 6, isoform 7 and isoform 8." evidence="31">
    <location>
        <begin position="1716"/>
        <end position="1731"/>
    </location>
</feature>
<feature type="mutagenesis site" description="Strongly reduced palmitoylation; when associated with A-849 and A-2215." evidence="20">
    <original>C</original>
    <variation>A</variation>
    <location>
        <position position="56"/>
    </location>
</feature>
<feature type="mutagenesis site" description="Nearly abolishes calcium flux." evidence="16">
    <original>Y</original>
    <variation>A</variation>
    <location>
        <position position="167"/>
    </location>
</feature>
<feature type="mutagenesis site" description="Reduces calcium flux by about 50%." evidence="16">
    <original>K</original>
    <variation>A</variation>
    <location>
        <position position="168"/>
    </location>
</feature>
<feature type="mutagenesis site" description="Reduces calcium flux by about 50%." evidence="16">
    <original>L</original>
    <variation>A</variation>
    <location>
        <position position="169"/>
    </location>
</feature>
<feature type="mutagenesis site" description="Abolishes inositol 1,4,5-triphosphate binding." evidence="10">
    <original>T</original>
    <variation>A</variation>
    <location>
        <position position="267"/>
    </location>
</feature>
<feature type="mutagenesis site" description="Abolishes inositol 1,4,5-triphosphate binding." evidence="10">
    <original>Y</original>
    <variation>A</variation>
    <variation>F</variation>
    <location>
        <position position="567"/>
    </location>
</feature>
<feature type="mutagenesis site" description="Strongly reduced palmitoylation; when associated with A-56 and A-2215." evidence="20">
    <original>C</original>
    <variation>A</variation>
    <location>
        <position position="849"/>
    </location>
</feature>
<feature type="mutagenesis site" description="Increases interaction with AHCYL1; when associated with A-1755." evidence="17">
    <original>S</original>
    <variation>A</variation>
    <location>
        <position position="1588"/>
    </location>
</feature>
<feature type="mutagenesis site" description="Decreases interaction with AHCYL1; when associated with A-1755." evidence="17">
    <original>S</original>
    <variation>E</variation>
    <location>
        <position position="1588"/>
    </location>
</feature>
<feature type="mutagenesis site" description="Increases interaction with AHCYL1; when associated with A-1588." evidence="17">
    <original>S</original>
    <variation>A</variation>
    <location>
        <position position="1755"/>
    </location>
</feature>
<feature type="mutagenesis site" description="Decreases interaction with AHCYL1; when associated with A-1588." evidence="17">
    <original>S</original>
    <variation>E</variation>
    <location>
        <position position="1755"/>
    </location>
</feature>
<feature type="mutagenesis site" description="Strongly reduced palmitoylation; when associated with A-56 and A-849." evidence="20">
    <original>C</original>
    <variation>A</variation>
    <location>
        <position position="2215"/>
    </location>
</feature>
<feature type="mutagenesis site" description="Does not affect inositol 1,4,5-trisphosphate-sensitive calcium-release channel activity. Does not affect ERLIN2 binding." evidence="24">
    <original>KD</original>
    <variation>AA</variation>
    <location>
        <begin position="2463"/>
        <end position="2464"/>
    </location>
</feature>
<feature type="mutagenesis site" description="Loss of interaction with the complex ERLIN1:ERLIN2:RNF170 after stimulation with GNRH1. Does not affect homotetramerization. Loss of inositol 1,4,5-trisphosphate-sensitive calcium-release channel activity." evidence="24">
    <location>
        <begin position="2463"/>
        <end position="2464"/>
    </location>
</feature>
<feature type="mutagenesis site" description="Loss of inositol 1,4,5-trisphosphate-sensitive calcium-release channel activity. Loss of ERLIN2 binding." evidence="24">
    <original>DD</original>
    <variation>NN</variation>
    <location>
        <begin position="2464"/>
        <end position="2465"/>
    </location>
</feature>
<feature type="mutagenesis site" description="Loss of inositol 1,4,5-trisphosphate-sensitive calcium-release channel activity. Loss of ERLIN2 binding." evidence="24">
    <original>DFI</original>
    <variation>AAA</variation>
    <location>
        <begin position="2465"/>
        <end position="2467"/>
    </location>
</feature>
<feature type="mutagenesis site" description="Loss of interaction with the complex ERLIN1:ERLIN2:RNF170 after stimulation with GNRH1. Does not affect homotetramerization. Loss of inositol 1,4,5-trisphosphate-sensitive calcium-release channel activity." evidence="24">
    <location>
        <begin position="2465"/>
        <end position="2467"/>
    </location>
</feature>
<feature type="mutagenesis site" description="Loss of the vast majority of inositol 1,4,5-trisphosphate-sensitive calcium-release channel activity. Loss of ERLIN2 binding." evidence="24">
    <original>D</original>
    <variation>N</variation>
    <location>
        <position position="2465"/>
    </location>
</feature>
<feature type="mutagenesis site" description="Loss of interaction with the complex ERLIN1:ERLIN2:RNF170 after stimulation with GNRH1. Does not affect homotetramerization. Loss of inositol 1,4,5-trisphosphate-sensitive calcium-release channel activity." evidence="24">
    <location>
        <begin position="2468"/>
        <end position="2470"/>
    </location>
</feature>
<feature type="mutagenesis site" description="Loss of binding to the ERLIN1:ERLIN2:RNF170 complex. Does not affect inositol 1,4,5-trisphosphate-sensitive calcium-release channel activity. Does not affect homotetramerization." evidence="24">
    <original>DR</original>
    <variation>AA</variation>
    <location>
        <begin position="2471"/>
        <end position="2472"/>
    </location>
</feature>
<feature type="mutagenesis site" description="Loss of binding to the ERLIN1:ERLIN2:RNF170 complex. Does not affect inositol 1,4,5-trisphosphate-sensitive calcium-release channel activity. Loss of polyubiquitination." evidence="24">
    <original>DR</original>
    <variation>GG</variation>
    <location>
        <begin position="2471"/>
        <end position="2472"/>
    </location>
</feature>
<feature type="mutagenesis site" description="Does not affect binding to the ERLIN1:ERLIN2:RNF170 complex. Does not affect inositol 1,4,5-trisphosphate-sensitive calcium-release channel activity." evidence="24">
    <original>DR</original>
    <variation>NQ</variation>
    <location>
        <begin position="2471"/>
        <end position="2472"/>
    </location>
</feature>
<feature type="mutagenesis site" description="Loss of interaction with the complex ERLIN1:ERLIN2:RNF170 after stimulation with GNRH1. Does not affect homotetramerization. Does not affect inositol 1,4,5-trisphosphate-sensitive calcium-release channel activity." evidence="24">
    <location>
        <begin position="2471"/>
        <end position="2472"/>
    </location>
</feature>
<feature type="mutagenesis site" description="Does not affect binding to the ERLIN1:ERLIN2:RNF170 complex. Does not affect inositol 1,4,5-trisphosphate-sensitive calcium-release channel activity." evidence="24">
    <original>D</original>
    <variation>N</variation>
    <location>
        <position position="2471"/>
    </location>
</feature>
<feature type="mutagenesis site" description="Does not affect binding to the ERLIN1:ERLIN2:RNF170 complex. Does not affect inositol 1,4,5-trisphosphate-sensitive calcium-release channel activity." evidence="24">
    <original>R</original>
    <variation>Q</variation>
    <location>
        <position position="2472"/>
    </location>
</feature>
<feature type="mutagenesis site" description="No effect on channel activity. Significant decrease of interaction with ERP44. Complete loss of channel inhibition by ERP44." evidence="12">
    <original>C</original>
    <variation>S</variation>
    <location>
        <position position="2496"/>
    </location>
</feature>
<feature type="mutagenesis site" description="No effect on channel activity. Significant decrease of interaction with ERP44. Complete loss of channel inhibition by ERP44." evidence="12">
    <original>C</original>
    <variation>S</variation>
    <location>
        <position position="2504"/>
    </location>
</feature>
<feature type="mutagenesis site" description="Complete loss of channel activity. Significant decrease of interaction with ERP44." evidence="12">
    <original>C</original>
    <variation>S</variation>
    <location>
        <position position="2527"/>
    </location>
</feature>
<feature type="mutagenesis site" description="Does not affect inositol 1,4,5-trisphosphate-sensitive calcium-release channel activity." evidence="24">
    <original>D</original>
    <variation>A</variation>
    <location>
        <position position="2550"/>
    </location>
</feature>
<feature type="mutagenesis site" description="Loss of inositol 1,4,5-trisphosphate-sensitive calcium-release channel activity." evidence="24">
    <original>R</original>
    <variation>A</variation>
    <location>
        <position position="2596"/>
    </location>
</feature>
<feature type="sequence conflict" description="In Ref. 1; CAA33433." evidence="31" ref="1">
    <original>N</original>
    <variation>K</variation>
    <location>
        <position position="1264"/>
    </location>
</feature>
<feature type="sequence conflict" description="In Ref. 1; CAA33433." evidence="31" ref="1">
    <original>P</original>
    <variation>L</variation>
    <location>
        <position position="2675"/>
    </location>
</feature>
<feature type="strand" evidence="47">
    <location>
        <begin position="14"/>
        <end position="23"/>
    </location>
</feature>
<feature type="strand" evidence="47">
    <location>
        <begin position="25"/>
        <end position="30"/>
    </location>
</feature>
<feature type="strand" evidence="47">
    <location>
        <begin position="36"/>
        <end position="39"/>
    </location>
</feature>
<feature type="helix" evidence="47">
    <location>
        <begin position="41"/>
        <end position="43"/>
    </location>
</feature>
<feature type="strand" evidence="47">
    <location>
        <begin position="46"/>
        <end position="48"/>
    </location>
</feature>
<feature type="helix" evidence="47">
    <location>
        <begin position="53"/>
        <end position="56"/>
    </location>
</feature>
<feature type="strand" evidence="47">
    <location>
        <begin position="58"/>
        <end position="61"/>
    </location>
</feature>
<feature type="helix" evidence="47">
    <location>
        <begin position="67"/>
        <end position="74"/>
    </location>
</feature>
<feature type="helix" evidence="47">
    <location>
        <begin position="86"/>
        <end position="109"/>
    </location>
</feature>
<feature type="turn" evidence="47">
    <location>
        <begin position="110"/>
        <end position="112"/>
    </location>
</feature>
<feature type="strand" evidence="47">
    <location>
        <begin position="120"/>
        <end position="125"/>
    </location>
</feature>
<feature type="turn" evidence="47">
    <location>
        <begin position="126"/>
        <end position="129"/>
    </location>
</feature>
<feature type="strand" evidence="47">
    <location>
        <begin position="130"/>
        <end position="139"/>
    </location>
</feature>
<feature type="strand" evidence="47">
    <location>
        <begin position="141"/>
        <end position="143"/>
    </location>
</feature>
<feature type="strand" evidence="47">
    <location>
        <begin position="146"/>
        <end position="154"/>
    </location>
</feature>
<feature type="helix" evidence="47">
    <location>
        <begin position="157"/>
        <end position="159"/>
    </location>
</feature>
<feature type="strand" evidence="47">
    <location>
        <begin position="161"/>
        <end position="167"/>
    </location>
</feature>
<feature type="strand" evidence="47">
    <location>
        <begin position="181"/>
        <end position="189"/>
    </location>
</feature>
<feature type="strand" evidence="47">
    <location>
        <begin position="193"/>
        <end position="199"/>
    </location>
</feature>
<feature type="strand" evidence="47">
    <location>
        <begin position="201"/>
        <end position="205"/>
    </location>
</feature>
<feature type="strand" evidence="47">
    <location>
        <begin position="207"/>
        <end position="213"/>
    </location>
</feature>
<feature type="strand" evidence="47">
    <location>
        <begin position="217"/>
        <end position="223"/>
    </location>
</feature>
<feature type="strand" evidence="46">
    <location>
        <begin position="239"/>
        <end position="244"/>
    </location>
</feature>
<feature type="turn" evidence="46">
    <location>
        <begin position="245"/>
        <end position="248"/>
    </location>
</feature>
<feature type="strand" evidence="46">
    <location>
        <begin position="249"/>
        <end position="255"/>
    </location>
</feature>
<feature type="strand" evidence="46">
    <location>
        <begin position="257"/>
        <end position="265"/>
    </location>
</feature>
<feature type="strand" evidence="46">
    <location>
        <begin position="269"/>
        <end position="271"/>
    </location>
</feature>
<feature type="helix" evidence="46">
    <location>
        <begin position="272"/>
        <end position="274"/>
    </location>
</feature>
<feature type="helix" evidence="46">
    <location>
        <begin position="278"/>
        <end position="280"/>
    </location>
</feature>
<feature type="strand" evidence="46">
    <location>
        <begin position="282"/>
        <end position="286"/>
    </location>
</feature>
<feature type="strand" evidence="46">
    <location>
        <begin position="303"/>
        <end position="307"/>
    </location>
</feature>
<feature type="turn" evidence="46">
    <location>
        <begin position="308"/>
        <end position="310"/>
    </location>
</feature>
<feature type="strand" evidence="46">
    <location>
        <begin position="313"/>
        <end position="318"/>
    </location>
</feature>
<feature type="strand" evidence="46">
    <location>
        <begin position="353"/>
        <end position="359"/>
    </location>
</feature>
<feature type="helix" evidence="46">
    <location>
        <begin position="364"/>
        <end position="366"/>
    </location>
</feature>
<feature type="strand" evidence="46">
    <location>
        <begin position="368"/>
        <end position="371"/>
    </location>
</feature>
<feature type="strand" evidence="46">
    <location>
        <begin position="388"/>
        <end position="392"/>
    </location>
</feature>
<feature type="turn" evidence="46">
    <location>
        <begin position="393"/>
        <end position="396"/>
    </location>
</feature>
<feature type="strand" evidence="46">
    <location>
        <begin position="397"/>
        <end position="406"/>
    </location>
</feature>
<feature type="strand" evidence="46">
    <location>
        <begin position="409"/>
        <end position="412"/>
    </location>
</feature>
<feature type="strand" evidence="46">
    <location>
        <begin position="415"/>
        <end position="423"/>
    </location>
</feature>
<feature type="strand" evidence="46">
    <location>
        <begin position="430"/>
        <end position="434"/>
    </location>
</feature>
<feature type="helix" evidence="46">
    <location>
        <begin position="437"/>
        <end position="461"/>
    </location>
</feature>
<feature type="helix" evidence="46">
    <location>
        <begin position="467"/>
        <end position="484"/>
    </location>
</feature>
<feature type="turn" evidence="46">
    <location>
        <begin position="485"/>
        <end position="487"/>
    </location>
</feature>
<feature type="helix" evidence="46">
    <location>
        <begin position="495"/>
        <end position="499"/>
    </location>
</feature>
<feature type="helix" evidence="46">
    <location>
        <begin position="504"/>
        <end position="512"/>
    </location>
</feature>
<feature type="helix" evidence="46">
    <location>
        <begin position="515"/>
        <end position="524"/>
    </location>
</feature>
<feature type="helix" evidence="46">
    <location>
        <begin position="525"/>
        <end position="527"/>
    </location>
</feature>
<feature type="helix" evidence="46">
    <location>
        <begin position="547"/>
        <end position="564"/>
    </location>
</feature>
<feature type="helix" evidence="46">
    <location>
        <begin position="568"/>
        <end position="585"/>
    </location>
</feature>
<feature type="helix" evidence="46">
    <location>
        <begin position="589"/>
        <end position="599"/>
    </location>
</feature>